<keyword id="KW-0002">3D-structure</keyword>
<keyword id="KW-0007">Acetylation</keyword>
<keyword id="KW-0010">Activator</keyword>
<keyword id="KW-0877">Alternative promoter usage</keyword>
<keyword id="KW-0025">Alternative splicing</keyword>
<keyword id="KW-0225">Disease variant</keyword>
<keyword id="KW-0238">DNA-binding</keyword>
<keyword id="KW-0391">Immunity</keyword>
<keyword id="KW-0395">Inflammatory response</keyword>
<keyword id="KW-0399">Innate immunity</keyword>
<keyword id="KW-0988">Intrahepatic cholestasis</keyword>
<keyword id="KW-1017">Isopeptide bond</keyword>
<keyword id="KW-0479">Metal-binding</keyword>
<keyword id="KW-0488">Methylation</keyword>
<keyword id="KW-0539">Nucleus</keyword>
<keyword id="KW-0597">Phosphoprotein</keyword>
<keyword id="KW-1267">Proteomics identification</keyword>
<keyword id="KW-0675">Receptor</keyword>
<keyword id="KW-1185">Reference proteome</keyword>
<keyword id="KW-0678">Repressor</keyword>
<keyword id="KW-0804">Transcription</keyword>
<keyword id="KW-0805">Transcription regulation</keyword>
<keyword id="KW-0832">Ubl conjugation</keyword>
<keyword id="KW-0862">Zinc</keyword>
<keyword id="KW-0863">Zinc-finger</keyword>
<feature type="chain" id="PRO_0000053538" description="Bile acid receptor">
    <location>
        <begin position="1"/>
        <end position="486"/>
    </location>
</feature>
<feature type="domain" description="NR LBD" evidence="4">
    <location>
        <begin position="262"/>
        <end position="486"/>
    </location>
</feature>
<feature type="DNA-binding region" description="Nuclear receptor" evidence="3">
    <location>
        <begin position="134"/>
        <end position="209"/>
    </location>
</feature>
<feature type="zinc finger region" description="NR C4-type" evidence="3">
    <location>
        <begin position="137"/>
        <end position="157"/>
    </location>
</feature>
<feature type="zinc finger region" description="NR C4-type" evidence="3">
    <location>
        <begin position="173"/>
        <end position="197"/>
    </location>
</feature>
<feature type="binding site" evidence="63">
    <location>
        <position position="345"/>
    </location>
    <ligand>
        <name>chenodeoxycholate</name>
        <dbReference type="ChEBI" id="CHEBI:36234"/>
        <note>agonist</note>
    </ligand>
</feature>
<feature type="binding site" evidence="63">
    <location>
        <position position="375"/>
    </location>
    <ligand>
        <name>chenodeoxycholate</name>
        <dbReference type="ChEBI" id="CHEBI:36234"/>
        <note>agonist</note>
    </ligand>
</feature>
<feature type="binding site" evidence="63">
    <location>
        <position position="383"/>
    </location>
    <ligand>
        <name>chenodeoxycholate</name>
        <dbReference type="ChEBI" id="CHEBI:36234"/>
        <note>agonist</note>
    </ligand>
</feature>
<feature type="binding site" evidence="63">
    <location>
        <position position="461"/>
    </location>
    <ligand>
        <name>chenodeoxycholate</name>
        <dbReference type="ChEBI" id="CHEBI:36234"/>
        <note>agonist</note>
    </ligand>
</feature>
<feature type="modified residue" description="Phosphoserine; by PKC/PRKCA" evidence="31">
    <location>
        <position position="145"/>
    </location>
</feature>
<feature type="modified residue" description="Phosphoserine; by PKC/PRKCA" evidence="31">
    <location>
        <position position="164"/>
    </location>
</feature>
<feature type="modified residue" description="N6-acetyllysine; by EP300">
    <location>
        <position position="167"/>
    </location>
</feature>
<feature type="modified residue" description="N6-methyllysine; by SETD7" evidence="44">
    <location>
        <position position="220"/>
    </location>
</feature>
<feature type="modified residue" description="N6-acetyllysine; by EP300">
    <location>
        <position position="227"/>
    </location>
</feature>
<feature type="modified residue" description="Phosphothreonine; by PKC/PRKCZ" evidence="57">
    <location>
        <position position="456"/>
    </location>
</feature>
<feature type="cross-link" description="Glycyl lysine isopeptide (Lys-Gly) (interchain with G-Cter in SUMO1)" evidence="61">
    <location>
        <position position="132"/>
    </location>
</feature>
<feature type="cross-link" description="Glycyl lysine isopeptide (Lys-Gly) (interchain with G-Cter in SUMO1)" evidence="61">
    <location>
        <position position="289"/>
    </location>
</feature>
<feature type="splice variant" id="VSP_010135" description="In isoform 3, isoform 4 and isoform 5." evidence="51 52 53">
    <original>MVMQFQGLENPIQISPHCSCTPSGFFMEMMSMKPAK</original>
    <variation>MGSKMNLIEHSHLPTTDEFSFSENLF</variation>
    <location>
        <begin position="1"/>
        <end position="36"/>
    </location>
</feature>
<feature type="splice variant" id="VSP_044547" description="In isoform 5." evidence="51">
    <location>
        <begin position="159"/>
        <end position="209"/>
    </location>
</feature>
<feature type="splice variant" id="VSP_003665" description="In isoform 2 and isoform 4." evidence="50 53">
    <location>
        <begin position="207"/>
        <end position="210"/>
    </location>
</feature>
<feature type="sequence variant" id="VAR_077017" description="In PFIC5; loss of isoform 4 transcription regulatory region sequence-specific DNA binding activity; loss of isoform 4 function in regulation of transcription DNA-templated." evidence="48">
    <original>Y</original>
    <variation>YK</variation>
    <location>
        <position position="149"/>
    </location>
</feature>
<feature type="mutagenesis site" description="Abrogates SUMO1-mediated inhibition of ligand-induced transcactivation at ABCB11/BSEP and NR0B2/SHP promoters; when associated with R-289 and A-291." evidence="46">
    <original>K</original>
    <variation>R</variation>
    <location>
        <position position="132"/>
    </location>
</feature>
<feature type="mutagenesis site" description="Decreases transcriptional activation SLC51A/OSTA, SLC51B/OSTB and ABCB11/BSEP, no effect on interaction with RXRA and SETD7." evidence="45">
    <original>K</original>
    <variation>R</variation>
    <location>
        <position position="132"/>
    </location>
</feature>
<feature type="mutagenesis site" description="Impairs ligand-dependent transactivation activity, impairs interaction with PPARGC1A; when associated with A-164." evidence="31">
    <original>S</original>
    <variation>A</variation>
    <location>
        <position position="145"/>
    </location>
</feature>
<feature type="mutagenesis site" description="Impairs ligand-dependent transactivation activity, impairs interaction with PPARGC1A; when associated with A-145." evidence="31">
    <original>S</original>
    <variation>A</variation>
    <location>
        <position position="164"/>
    </location>
</feature>
<feature type="mutagenesis site" description="Decreases transcriptional activation of SLC51B/OSTB, no effect on SLC51A/OSTA and ABCB11/BSEP, no effect on interaction with RXRA and SETD7." evidence="45">
    <original>K</original>
    <variation>R</variation>
    <location>
        <position position="167"/>
    </location>
</feature>
<feature type="mutagenesis site" description="Decreases transcriptional activation of SLC51B/OSTB, no effect on SLC51A/OSTA and ABCB11/BSEP, impairs interaction with RXRA and SETD7." evidence="45">
    <original>K</original>
    <variation>R</variation>
    <location>
        <position position="220"/>
    </location>
</feature>
<feature type="mutagenesis site" description="Decreases transcriptional activation SC51A/OSTA, SLC51B/OSTB and ABCB11/BSEP, impairs interaction with RXRA and enhances interaction with SETD7, decreases association with ABCB11/BSEP promoter." evidence="45">
    <original>K</original>
    <variation>R</variation>
    <location>
        <position position="227"/>
    </location>
</feature>
<feature type="mutagenesis site" description="Abrogates SUMO1-mediated inhibition of ligand-induced transcactivation at ABCB11/BSEP and NR0B2/SHP promoters; when associated with R-132 and A-291." evidence="46">
    <original>K</original>
    <variation>R</variation>
    <location>
        <position position="289"/>
    </location>
</feature>
<feature type="mutagenesis site" description="Abrogates SUMO1-mediated inhibition of ligand-induced transcactivation at ABCB11/BSEP and NR0B2/SHP promoters; when associated with R-132 and R-289." evidence="46">
    <original>E</original>
    <variation>A</variation>
    <location>
        <position position="291"/>
    </location>
</feature>
<feature type="mutagenesis site" description="Decreases transcriptional activation SLC51A/OSTA, SLC51B/OSTB and ABCB11/BSEP, no effect on interaction with RXRA and SETD7, decreases association with ABCB11/BSEP promoter." evidence="45">
    <original>K</original>
    <variation>R</variation>
    <location>
        <position position="353"/>
    </location>
</feature>
<feature type="mutagenesis site" description="As a heterodimer with RXRA, impaired transcriptional activity." evidence="49">
    <original>R</original>
    <variation>S</variation>
    <location>
        <position position="455"/>
    </location>
</feature>
<feature type="mutagenesis site" description="Impairs transcriptional activation of ABCB11/BSEP." evidence="30">
    <original>T</original>
    <variation>A</variation>
    <location>
        <position position="456"/>
    </location>
</feature>
<feature type="mutagenesis site" description="Decreases transcriptional activation SLC51A/OSTA, SLC51B/OSTB and ABCB11/BSEP, no effect on interaction with RXRA and impairs interaction with SETD7." evidence="45">
    <original>K</original>
    <variation>R</variation>
    <location>
        <position position="474"/>
    </location>
</feature>
<feature type="sequence conflict" description="In Ref. 7; AAI44185." evidence="54" ref="7">
    <original>K</original>
    <variation>R</variation>
    <location>
        <position position="198"/>
    </location>
</feature>
<feature type="sequence conflict" description="In Ref. 7; BC144183." evidence="54" ref="7">
    <original>C</original>
    <variation>V</variation>
    <location>
        <position position="217"/>
    </location>
</feature>
<feature type="turn" evidence="71">
    <location>
        <begin position="138"/>
        <end position="140"/>
    </location>
</feature>
<feature type="strand" evidence="71">
    <location>
        <begin position="149"/>
        <end position="152"/>
    </location>
</feature>
<feature type="helix" evidence="71">
    <location>
        <begin position="155"/>
        <end position="167"/>
    </location>
</feature>
<feature type="helix" evidence="71">
    <location>
        <begin position="185"/>
        <end position="188"/>
    </location>
</feature>
<feature type="helix" evidence="71">
    <location>
        <begin position="191"/>
        <end position="199"/>
    </location>
</feature>
<feature type="helix" evidence="70">
    <location>
        <begin position="261"/>
        <end position="274"/>
    </location>
</feature>
<feature type="helix" evidence="70">
    <location>
        <begin position="281"/>
        <end position="289"/>
    </location>
</feature>
<feature type="helix" evidence="70">
    <location>
        <begin position="294"/>
        <end position="317"/>
    </location>
</feature>
<feature type="helix" evidence="70">
    <location>
        <begin position="322"/>
        <end position="324"/>
    </location>
</feature>
<feature type="helix" evidence="70">
    <location>
        <begin position="327"/>
        <end position="349"/>
    </location>
</feature>
<feature type="strand" evidence="67">
    <location>
        <begin position="350"/>
        <end position="353"/>
    </location>
</feature>
<feature type="turn" evidence="64">
    <location>
        <begin position="354"/>
        <end position="356"/>
    </location>
</feature>
<feature type="strand" evidence="66">
    <location>
        <begin position="357"/>
        <end position="359"/>
    </location>
</feature>
<feature type="helix" evidence="70">
    <location>
        <begin position="360"/>
        <end position="367"/>
    </location>
</feature>
<feature type="strand" evidence="65">
    <location>
        <begin position="369"/>
        <end position="371"/>
    </location>
</feature>
<feature type="helix" evidence="70">
    <location>
        <begin position="373"/>
        <end position="387"/>
    </location>
</feature>
<feature type="turn" evidence="64">
    <location>
        <begin position="388"/>
        <end position="390"/>
    </location>
</feature>
<feature type="helix" evidence="70">
    <location>
        <begin position="393"/>
        <end position="404"/>
    </location>
</feature>
<feature type="strand" evidence="65">
    <location>
        <begin position="409"/>
        <end position="411"/>
    </location>
</feature>
<feature type="helix" evidence="70">
    <location>
        <begin position="415"/>
        <end position="436"/>
    </location>
</feature>
<feature type="strand" evidence="68">
    <location>
        <begin position="438"/>
        <end position="440"/>
    </location>
</feature>
<feature type="helix" evidence="70">
    <location>
        <begin position="443"/>
        <end position="465"/>
    </location>
</feature>
<feature type="helix" evidence="69">
    <location>
        <begin position="470"/>
        <end position="472"/>
    </location>
</feature>
<feature type="helix" evidence="70">
    <location>
        <begin position="477"/>
        <end position="483"/>
    </location>
</feature>
<evidence type="ECO:0000250" key="1">
    <source>
        <dbReference type="UniProtKB" id="Q60641"/>
    </source>
</evidence>
<evidence type="ECO:0000250" key="2">
    <source>
        <dbReference type="UniProtKB" id="Q62735"/>
    </source>
</evidence>
<evidence type="ECO:0000255" key="3">
    <source>
        <dbReference type="PROSITE-ProRule" id="PRU00407"/>
    </source>
</evidence>
<evidence type="ECO:0000255" key="4">
    <source>
        <dbReference type="PROSITE-ProRule" id="PRU01189"/>
    </source>
</evidence>
<evidence type="ECO:0000269" key="5">
    <source>
    </source>
</evidence>
<evidence type="ECO:0000269" key="6">
    <source>
    </source>
</evidence>
<evidence type="ECO:0000269" key="7">
    <source>
    </source>
</evidence>
<evidence type="ECO:0000269" key="8">
    <source>
    </source>
</evidence>
<evidence type="ECO:0000269" key="9">
    <source>
    </source>
</evidence>
<evidence type="ECO:0000269" key="10">
    <source>
    </source>
</evidence>
<evidence type="ECO:0000269" key="11">
    <source>
    </source>
</evidence>
<evidence type="ECO:0000269" key="12">
    <source>
    </source>
</evidence>
<evidence type="ECO:0000269" key="13">
    <source>
    </source>
</evidence>
<evidence type="ECO:0000269" key="14">
    <source>
    </source>
</evidence>
<evidence type="ECO:0000269" key="15">
    <source>
    </source>
</evidence>
<evidence type="ECO:0000269" key="16">
    <source>
    </source>
</evidence>
<evidence type="ECO:0000269" key="17">
    <source>
    </source>
</evidence>
<evidence type="ECO:0000269" key="18">
    <source>
    </source>
</evidence>
<evidence type="ECO:0000269" key="19">
    <source>
    </source>
</evidence>
<evidence type="ECO:0000269" key="20">
    <source>
    </source>
</evidence>
<evidence type="ECO:0000269" key="21">
    <source>
    </source>
</evidence>
<evidence type="ECO:0000269" key="22">
    <source>
    </source>
</evidence>
<evidence type="ECO:0000269" key="23">
    <source>
    </source>
</evidence>
<evidence type="ECO:0000269" key="24">
    <source>
    </source>
</evidence>
<evidence type="ECO:0000269" key="25">
    <source>
    </source>
</evidence>
<evidence type="ECO:0000269" key="26">
    <source>
    </source>
</evidence>
<evidence type="ECO:0000269" key="27">
    <source>
    </source>
</evidence>
<evidence type="ECO:0000269" key="28">
    <source>
    </source>
</evidence>
<evidence type="ECO:0000269" key="29">
    <source>
    </source>
</evidence>
<evidence type="ECO:0000269" key="30">
    <source>
    </source>
</evidence>
<evidence type="ECO:0000269" key="31">
    <source>
    </source>
</evidence>
<evidence type="ECO:0000269" key="32">
    <source>
    </source>
</evidence>
<evidence type="ECO:0000269" key="33">
    <source>
    </source>
</evidence>
<evidence type="ECO:0000269" key="34">
    <source>
    </source>
</evidence>
<evidence type="ECO:0000269" key="35">
    <source>
    </source>
</evidence>
<evidence type="ECO:0000269" key="36">
    <source>
    </source>
</evidence>
<evidence type="ECO:0000269" key="37">
    <source>
    </source>
</evidence>
<evidence type="ECO:0000269" key="38">
    <source>
    </source>
</evidence>
<evidence type="ECO:0000269" key="39">
    <source>
    </source>
</evidence>
<evidence type="ECO:0000269" key="40">
    <source>
    </source>
</evidence>
<evidence type="ECO:0000269" key="41">
    <source>
    </source>
</evidence>
<evidence type="ECO:0000269" key="42">
    <source>
    </source>
</evidence>
<evidence type="ECO:0000269" key="43">
    <source>
    </source>
</evidence>
<evidence type="ECO:0000269" key="44">
    <source>
    </source>
</evidence>
<evidence type="ECO:0000269" key="45">
    <source>
    </source>
</evidence>
<evidence type="ECO:0000269" key="46">
    <source>
    </source>
</evidence>
<evidence type="ECO:0000269" key="47">
    <source>
    </source>
</evidence>
<evidence type="ECO:0000269" key="48">
    <source>
    </source>
</evidence>
<evidence type="ECO:0000269" key="49">
    <source>
    </source>
</evidence>
<evidence type="ECO:0000303" key="50">
    <source>
    </source>
</evidence>
<evidence type="ECO:0000303" key="51">
    <source>
    </source>
</evidence>
<evidence type="ECO:0000303" key="52">
    <source ref="1"/>
</evidence>
<evidence type="ECO:0000303" key="53">
    <source ref="2"/>
</evidence>
<evidence type="ECO:0000305" key="54"/>
<evidence type="ECO:0000305" key="55">
    <source>
    </source>
</evidence>
<evidence type="ECO:0000305" key="56">
    <source>
    </source>
</evidence>
<evidence type="ECO:0000305" key="57">
    <source>
    </source>
</evidence>
<evidence type="ECO:0000305" key="58">
    <source>
    </source>
</evidence>
<evidence type="ECO:0000305" key="59">
    <source>
    </source>
</evidence>
<evidence type="ECO:0000305" key="60">
    <source>
    </source>
</evidence>
<evidence type="ECO:0000305" key="61">
    <source>
    </source>
</evidence>
<evidence type="ECO:0007744" key="62">
    <source>
        <dbReference type="PDB" id="6A5Y"/>
    </source>
</evidence>
<evidence type="ECO:0007744" key="63">
    <source>
        <dbReference type="PDB" id="6HL1"/>
    </source>
</evidence>
<evidence type="ECO:0007829" key="64">
    <source>
        <dbReference type="PDB" id="4OIV"/>
    </source>
</evidence>
<evidence type="ECO:0007829" key="65">
    <source>
        <dbReference type="PDB" id="5Q0I"/>
    </source>
</evidence>
<evidence type="ECO:0007829" key="66">
    <source>
        <dbReference type="PDB" id="5Y49"/>
    </source>
</evidence>
<evidence type="ECO:0007829" key="67">
    <source>
        <dbReference type="PDB" id="5YXD"/>
    </source>
</evidence>
<evidence type="ECO:0007829" key="68">
    <source>
        <dbReference type="PDB" id="6A5X"/>
    </source>
</evidence>
<evidence type="ECO:0007829" key="69">
    <source>
        <dbReference type="PDB" id="6HL0"/>
    </source>
</evidence>
<evidence type="ECO:0007829" key="70">
    <source>
        <dbReference type="PDB" id="6HL1"/>
    </source>
</evidence>
<evidence type="ECO:0007829" key="71">
    <source>
        <dbReference type="PDB" id="8HBM"/>
    </source>
</evidence>
<proteinExistence type="evidence at protein level"/>
<reference key="1">
    <citation type="submission" date="1996-08" db="EMBL/GenBank/DDBJ databases">
        <title>The identification of the cDNA coding for HRR-1, a novel human farnesol receptor.</title>
        <authorList>
            <person name="Papetti M."/>
            <person name="Wood N."/>
            <person name="Lohmar P.D."/>
            <person name="Bowman M.R."/>
        </authorList>
    </citation>
    <scope>NUCLEOTIDE SEQUENCE [MRNA] (ISOFORM 4)</scope>
</reference>
<reference key="2">
    <citation type="submission" date="2001-05" db="EMBL/GenBank/DDBJ databases">
        <title>Functional analysis of human farnesol receptor (NR1H4) splicing variant.</title>
        <authorList>
            <person name="Han J.-I."/>
            <person name="Bok S.-H."/>
            <person name="Jeong T.-S."/>
        </authorList>
    </citation>
    <scope>NUCLEOTIDE SEQUENCE [MRNA] (ISOFORM 3)</scope>
</reference>
<reference key="3">
    <citation type="journal article" date="2002" name="Gene">
        <title>Generation of multiple farnesoid-X-receptor isoforms through the use of alternative promoters.</title>
        <authorList>
            <person name="Huber R.M."/>
            <person name="Murphy K."/>
            <person name="Miao B."/>
            <person name="Link J.R."/>
            <person name="Cunningham M.R."/>
            <person name="Rupar M.J."/>
            <person name="Gunyuzlu P.L."/>
            <person name="Haws T.F. Jr."/>
            <person name="Kassam A."/>
            <person name="Powell F."/>
            <person name="Hollis G.F."/>
            <person name="Young P.R."/>
            <person name="Mukherjee R."/>
            <person name="Burn T.C."/>
        </authorList>
    </citation>
    <scope>NUCLEOTIDE SEQUENCE [MRNA] (ISOFORMS 1 AND 2)</scope>
    <scope>ALTERNATIVE SPLICING (ISOFORMS 3 AND 4)</scope>
</reference>
<reference key="4">
    <citation type="journal article" date="2004" name="Nat. Genet.">
        <title>Complete sequencing and characterization of 21,243 full-length human cDNAs.</title>
        <authorList>
            <person name="Ota T."/>
            <person name="Suzuki Y."/>
            <person name="Nishikawa T."/>
            <person name="Otsuki T."/>
            <person name="Sugiyama T."/>
            <person name="Irie R."/>
            <person name="Wakamatsu A."/>
            <person name="Hayashi K."/>
            <person name="Sato H."/>
            <person name="Nagai K."/>
            <person name="Kimura K."/>
            <person name="Makita H."/>
            <person name="Sekine M."/>
            <person name="Obayashi M."/>
            <person name="Nishi T."/>
            <person name="Shibahara T."/>
            <person name="Tanaka T."/>
            <person name="Ishii S."/>
            <person name="Yamamoto J."/>
            <person name="Saito K."/>
            <person name="Kawai Y."/>
            <person name="Isono Y."/>
            <person name="Nakamura Y."/>
            <person name="Nagahari K."/>
            <person name="Murakami K."/>
            <person name="Yasuda T."/>
            <person name="Iwayanagi T."/>
            <person name="Wagatsuma M."/>
            <person name="Shiratori A."/>
            <person name="Sudo H."/>
            <person name="Hosoiri T."/>
            <person name="Kaku Y."/>
            <person name="Kodaira H."/>
            <person name="Kondo H."/>
            <person name="Sugawara M."/>
            <person name="Takahashi M."/>
            <person name="Kanda K."/>
            <person name="Yokoi T."/>
            <person name="Furuya T."/>
            <person name="Kikkawa E."/>
            <person name="Omura Y."/>
            <person name="Abe K."/>
            <person name="Kamihara K."/>
            <person name="Katsuta N."/>
            <person name="Sato K."/>
            <person name="Tanikawa M."/>
            <person name="Yamazaki M."/>
            <person name="Ninomiya K."/>
            <person name="Ishibashi T."/>
            <person name="Yamashita H."/>
            <person name="Murakawa K."/>
            <person name="Fujimori K."/>
            <person name="Tanai H."/>
            <person name="Kimata M."/>
            <person name="Watanabe M."/>
            <person name="Hiraoka S."/>
            <person name="Chiba Y."/>
            <person name="Ishida S."/>
            <person name="Ono Y."/>
            <person name="Takiguchi S."/>
            <person name="Watanabe S."/>
            <person name="Yosida M."/>
            <person name="Hotuta T."/>
            <person name="Kusano J."/>
            <person name="Kanehori K."/>
            <person name="Takahashi-Fujii A."/>
            <person name="Hara H."/>
            <person name="Tanase T.-O."/>
            <person name="Nomura Y."/>
            <person name="Togiya S."/>
            <person name="Komai F."/>
            <person name="Hara R."/>
            <person name="Takeuchi K."/>
            <person name="Arita M."/>
            <person name="Imose N."/>
            <person name="Musashino K."/>
            <person name="Yuuki H."/>
            <person name="Oshima A."/>
            <person name="Sasaki N."/>
            <person name="Aotsuka S."/>
            <person name="Yoshikawa Y."/>
            <person name="Matsunawa H."/>
            <person name="Ichihara T."/>
            <person name="Shiohata N."/>
            <person name="Sano S."/>
            <person name="Moriya S."/>
            <person name="Momiyama H."/>
            <person name="Satoh N."/>
            <person name="Takami S."/>
            <person name="Terashima Y."/>
            <person name="Suzuki O."/>
            <person name="Nakagawa S."/>
            <person name="Senoh A."/>
            <person name="Mizoguchi H."/>
            <person name="Goto Y."/>
            <person name="Shimizu F."/>
            <person name="Wakebe H."/>
            <person name="Hishigaki H."/>
            <person name="Watanabe T."/>
            <person name="Sugiyama A."/>
            <person name="Takemoto M."/>
            <person name="Kawakami B."/>
            <person name="Yamazaki M."/>
            <person name="Watanabe K."/>
            <person name="Kumagai A."/>
            <person name="Itakura S."/>
            <person name="Fukuzumi Y."/>
            <person name="Fujimori Y."/>
            <person name="Komiyama M."/>
            <person name="Tashiro H."/>
            <person name="Tanigami A."/>
            <person name="Fujiwara T."/>
            <person name="Ono T."/>
            <person name="Yamada K."/>
            <person name="Fujii Y."/>
            <person name="Ozaki K."/>
            <person name="Hirao M."/>
            <person name="Ohmori Y."/>
            <person name="Kawabata A."/>
            <person name="Hikiji T."/>
            <person name="Kobatake N."/>
            <person name="Inagaki H."/>
            <person name="Ikema Y."/>
            <person name="Okamoto S."/>
            <person name="Okitani R."/>
            <person name="Kawakami T."/>
            <person name="Noguchi S."/>
            <person name="Itoh T."/>
            <person name="Shigeta K."/>
            <person name="Senba T."/>
            <person name="Matsumura K."/>
            <person name="Nakajima Y."/>
            <person name="Mizuno T."/>
            <person name="Morinaga M."/>
            <person name="Sasaki M."/>
            <person name="Togashi T."/>
            <person name="Oyama M."/>
            <person name="Hata H."/>
            <person name="Watanabe M."/>
            <person name="Komatsu T."/>
            <person name="Mizushima-Sugano J."/>
            <person name="Satoh T."/>
            <person name="Shirai Y."/>
            <person name="Takahashi Y."/>
            <person name="Nakagawa K."/>
            <person name="Okumura K."/>
            <person name="Nagase T."/>
            <person name="Nomura N."/>
            <person name="Kikuchi H."/>
            <person name="Masuho Y."/>
            <person name="Yamashita R."/>
            <person name="Nakai K."/>
            <person name="Yada T."/>
            <person name="Nakamura Y."/>
            <person name="Ohara O."/>
            <person name="Isogai T."/>
            <person name="Sugano S."/>
        </authorList>
    </citation>
    <scope>NUCLEOTIDE SEQUENCE [LARGE SCALE MRNA] (ISOFORM 1)</scope>
    <source>
        <tissue>Colon</tissue>
    </source>
</reference>
<reference key="5">
    <citation type="journal article" date="2006" name="Nature">
        <title>The finished DNA sequence of human chromosome 12.</title>
        <authorList>
            <person name="Scherer S.E."/>
            <person name="Muzny D.M."/>
            <person name="Buhay C.J."/>
            <person name="Chen R."/>
            <person name="Cree A."/>
            <person name="Ding Y."/>
            <person name="Dugan-Rocha S."/>
            <person name="Gill R."/>
            <person name="Gunaratne P."/>
            <person name="Harris R.A."/>
            <person name="Hawes A.C."/>
            <person name="Hernandez J."/>
            <person name="Hodgson A.V."/>
            <person name="Hume J."/>
            <person name="Jackson A."/>
            <person name="Khan Z.M."/>
            <person name="Kovar-Smith C."/>
            <person name="Lewis L.R."/>
            <person name="Lozado R.J."/>
            <person name="Metzker M.L."/>
            <person name="Milosavljevic A."/>
            <person name="Miner G.R."/>
            <person name="Montgomery K.T."/>
            <person name="Morgan M.B."/>
            <person name="Nazareth L.V."/>
            <person name="Scott G."/>
            <person name="Sodergren E."/>
            <person name="Song X.-Z."/>
            <person name="Steffen D."/>
            <person name="Lovering R.C."/>
            <person name="Wheeler D.A."/>
            <person name="Worley K.C."/>
            <person name="Yuan Y."/>
            <person name="Zhang Z."/>
            <person name="Adams C.Q."/>
            <person name="Ansari-Lari M.A."/>
            <person name="Ayele M."/>
            <person name="Brown M.J."/>
            <person name="Chen G."/>
            <person name="Chen Z."/>
            <person name="Clerc-Blankenburg K.P."/>
            <person name="Davis C."/>
            <person name="Delgado O."/>
            <person name="Dinh H.H."/>
            <person name="Draper H."/>
            <person name="Gonzalez-Garay M.L."/>
            <person name="Havlak P."/>
            <person name="Jackson L.R."/>
            <person name="Jacob L.S."/>
            <person name="Kelly S.H."/>
            <person name="Li L."/>
            <person name="Li Z."/>
            <person name="Liu J."/>
            <person name="Liu W."/>
            <person name="Lu J."/>
            <person name="Maheshwari M."/>
            <person name="Nguyen B.-V."/>
            <person name="Okwuonu G.O."/>
            <person name="Pasternak S."/>
            <person name="Perez L.M."/>
            <person name="Plopper F.J.H."/>
            <person name="Santibanez J."/>
            <person name="Shen H."/>
            <person name="Tabor P.E."/>
            <person name="Verduzco D."/>
            <person name="Waldron L."/>
            <person name="Wang Q."/>
            <person name="Williams G.A."/>
            <person name="Zhang J."/>
            <person name="Zhou J."/>
            <person name="Allen C.C."/>
            <person name="Amin A.G."/>
            <person name="Anyalebechi V."/>
            <person name="Bailey M."/>
            <person name="Barbaria J.A."/>
            <person name="Bimage K.E."/>
            <person name="Bryant N.P."/>
            <person name="Burch P.E."/>
            <person name="Burkett C.E."/>
            <person name="Burrell K.L."/>
            <person name="Calderon E."/>
            <person name="Cardenas V."/>
            <person name="Carter K."/>
            <person name="Casias K."/>
            <person name="Cavazos I."/>
            <person name="Cavazos S.R."/>
            <person name="Ceasar H."/>
            <person name="Chacko J."/>
            <person name="Chan S.N."/>
            <person name="Chavez D."/>
            <person name="Christopoulos C."/>
            <person name="Chu J."/>
            <person name="Cockrell R."/>
            <person name="Cox C.D."/>
            <person name="Dang M."/>
            <person name="Dathorne S.R."/>
            <person name="David R."/>
            <person name="Davis C.M."/>
            <person name="Davy-Carroll L."/>
            <person name="Deshazo D.R."/>
            <person name="Donlin J.E."/>
            <person name="D'Souza L."/>
            <person name="Eaves K.A."/>
            <person name="Egan A."/>
            <person name="Emery-Cohen A.J."/>
            <person name="Escotto M."/>
            <person name="Flagg N."/>
            <person name="Forbes L.D."/>
            <person name="Gabisi A.M."/>
            <person name="Garza M."/>
            <person name="Hamilton C."/>
            <person name="Henderson N."/>
            <person name="Hernandez O."/>
            <person name="Hines S."/>
            <person name="Hogues M.E."/>
            <person name="Huang M."/>
            <person name="Idlebird D.G."/>
            <person name="Johnson R."/>
            <person name="Jolivet A."/>
            <person name="Jones S."/>
            <person name="Kagan R."/>
            <person name="King L.M."/>
            <person name="Leal B."/>
            <person name="Lebow H."/>
            <person name="Lee S."/>
            <person name="LeVan J.M."/>
            <person name="Lewis L.C."/>
            <person name="London P."/>
            <person name="Lorensuhewa L.M."/>
            <person name="Loulseged H."/>
            <person name="Lovett D.A."/>
            <person name="Lucier A."/>
            <person name="Lucier R.L."/>
            <person name="Ma J."/>
            <person name="Madu R.C."/>
            <person name="Mapua P."/>
            <person name="Martindale A.D."/>
            <person name="Martinez E."/>
            <person name="Massey E."/>
            <person name="Mawhiney S."/>
            <person name="Meador M.G."/>
            <person name="Mendez S."/>
            <person name="Mercado C."/>
            <person name="Mercado I.C."/>
            <person name="Merritt C.E."/>
            <person name="Miner Z.L."/>
            <person name="Minja E."/>
            <person name="Mitchell T."/>
            <person name="Mohabbat F."/>
            <person name="Mohabbat K."/>
            <person name="Montgomery B."/>
            <person name="Moore N."/>
            <person name="Morris S."/>
            <person name="Munidasa M."/>
            <person name="Ngo R.N."/>
            <person name="Nguyen N.B."/>
            <person name="Nickerson E."/>
            <person name="Nwaokelemeh O.O."/>
            <person name="Nwokenkwo S."/>
            <person name="Obregon M."/>
            <person name="Oguh M."/>
            <person name="Oragunye N."/>
            <person name="Oviedo R.J."/>
            <person name="Parish B.J."/>
            <person name="Parker D.N."/>
            <person name="Parrish J."/>
            <person name="Parks K.L."/>
            <person name="Paul H.A."/>
            <person name="Payton B.A."/>
            <person name="Perez A."/>
            <person name="Perrin W."/>
            <person name="Pickens A."/>
            <person name="Primus E.L."/>
            <person name="Pu L.-L."/>
            <person name="Puazo M."/>
            <person name="Quiles M.M."/>
            <person name="Quiroz J.B."/>
            <person name="Rabata D."/>
            <person name="Reeves K."/>
            <person name="Ruiz S.J."/>
            <person name="Shao H."/>
            <person name="Sisson I."/>
            <person name="Sonaike T."/>
            <person name="Sorelle R.P."/>
            <person name="Sutton A.E."/>
            <person name="Svatek A.F."/>
            <person name="Svetz L.A."/>
            <person name="Tamerisa K.S."/>
            <person name="Taylor T.R."/>
            <person name="Teague B."/>
            <person name="Thomas N."/>
            <person name="Thorn R.D."/>
            <person name="Trejos Z.Y."/>
            <person name="Trevino B.K."/>
            <person name="Ukegbu O.N."/>
            <person name="Urban J.B."/>
            <person name="Vasquez L.I."/>
            <person name="Vera V.A."/>
            <person name="Villasana D.M."/>
            <person name="Wang L."/>
            <person name="Ward-Moore S."/>
            <person name="Warren J.T."/>
            <person name="Wei X."/>
            <person name="White F."/>
            <person name="Williamson A.L."/>
            <person name="Wleczyk R."/>
            <person name="Wooden H.S."/>
            <person name="Wooden S.H."/>
            <person name="Yen J."/>
            <person name="Yoon L."/>
            <person name="Yoon V."/>
            <person name="Zorrilla S.E."/>
            <person name="Nelson D."/>
            <person name="Kucherlapati R."/>
            <person name="Weinstock G."/>
            <person name="Gibbs R.A."/>
        </authorList>
    </citation>
    <scope>NUCLEOTIDE SEQUENCE [LARGE SCALE GENOMIC DNA]</scope>
</reference>
<reference key="6">
    <citation type="submission" date="2005-07" db="EMBL/GenBank/DDBJ databases">
        <authorList>
            <person name="Mural R.J."/>
            <person name="Istrail S."/>
            <person name="Sutton G.G."/>
            <person name="Florea L."/>
            <person name="Halpern A.L."/>
            <person name="Mobarry C.M."/>
            <person name="Lippert R."/>
            <person name="Walenz B."/>
            <person name="Shatkay H."/>
            <person name="Dew I."/>
            <person name="Miller J.R."/>
            <person name="Flanigan M.J."/>
            <person name="Edwards N.J."/>
            <person name="Bolanos R."/>
            <person name="Fasulo D."/>
            <person name="Halldorsson B.V."/>
            <person name="Hannenhalli S."/>
            <person name="Turner R."/>
            <person name="Yooseph S."/>
            <person name="Lu F."/>
            <person name="Nusskern D.R."/>
            <person name="Shue B.C."/>
            <person name="Zheng X.H."/>
            <person name="Zhong F."/>
            <person name="Delcher A.L."/>
            <person name="Huson D.H."/>
            <person name="Kravitz S.A."/>
            <person name="Mouchard L."/>
            <person name="Reinert K."/>
            <person name="Remington K.A."/>
            <person name="Clark A.G."/>
            <person name="Waterman M.S."/>
            <person name="Eichler E.E."/>
            <person name="Adams M.D."/>
            <person name="Hunkapiller M.W."/>
            <person name="Myers E.W."/>
            <person name="Venter J.C."/>
        </authorList>
    </citation>
    <scope>NUCLEOTIDE SEQUENCE [LARGE SCALE GENOMIC DNA]</scope>
</reference>
<reference key="7">
    <citation type="journal article" date="2004" name="Genome Res.">
        <title>The status, quality, and expansion of the NIH full-length cDNA project: the Mammalian Gene Collection (MGC).</title>
        <authorList>
            <consortium name="The MGC Project Team"/>
        </authorList>
    </citation>
    <scope>NUCLEOTIDE SEQUENCE [LARGE SCALE MRNA] (ISOFORMS 3 AND 5)</scope>
</reference>
<reference key="8">
    <citation type="journal article" date="1999" name="J. Biol. Chem.">
        <title>Identification of a bile acid-responsive element in the human ileal bile acid-binding protein gene. Involvement of the farnesoid X receptor/9-cis-retinoic acid receptor heterodimer.</title>
        <authorList>
            <person name="Grober J."/>
            <person name="Zaghini I."/>
            <person name="Fujii H."/>
            <person name="Jones S.A."/>
            <person name="Kliewer S.A."/>
            <person name="Willson T.M."/>
            <person name="Ono T."/>
            <person name="Besnard P."/>
        </authorList>
    </citation>
    <scope>FUNCTION IN BA HOMEOSTASIS</scope>
</reference>
<reference key="9">
    <citation type="journal article" date="1999" name="Science">
        <title>Identification of a nuclear receptor for bile acids.</title>
        <authorList>
            <person name="Makishima M."/>
            <person name="Okamoto A.Y."/>
            <person name="Repa J.J."/>
            <person name="Tu H."/>
            <person name="Learned R.M."/>
            <person name="Luk A."/>
            <person name="Hull M.V."/>
            <person name="Lustig K.D."/>
            <person name="Mangelsdorf D.J."/>
            <person name="Shan B."/>
        </authorList>
    </citation>
    <scope>FUNCTION IN BA HOEMOSTASIS</scope>
</reference>
<reference key="10">
    <citation type="journal article" date="1999" name="Science">
        <title>Bile acids: natural ligands for an orphan nuclear receptor.</title>
        <authorList>
            <person name="Parks D.J."/>
            <person name="Blanchard S.G."/>
            <person name="Bledsoe R.K."/>
            <person name="Chandra G."/>
            <person name="Consler T.G."/>
            <person name="Kliewer S.A."/>
            <person name="Stimmel J.B."/>
            <person name="Willson T.M."/>
            <person name="Zavacki A.M."/>
            <person name="Moore D.D."/>
            <person name="Lehmann J.M."/>
        </authorList>
    </citation>
    <scope>FUNCTION IN BA HOEMOSTASIS</scope>
</reference>
<reference key="11">
    <citation type="journal article" date="2001" name="Mol. Endocrinol.">
        <title>Farnesoid X-activated receptor induces apolipoprotein C-II transcription: a molecular mechanism linking plasma triglyceride levels to bile acids.</title>
        <authorList>
            <person name="Kast H.R."/>
            <person name="Nguyen C.M."/>
            <person name="Sinal C.J."/>
            <person name="Jones S.A."/>
            <person name="Laffitte B.A."/>
            <person name="Reue K."/>
            <person name="Gonzalez F.J."/>
            <person name="Willson T.M."/>
            <person name="Edwards P.A."/>
        </authorList>
    </citation>
    <scope>FUNCTION IN LIPID HOMEOSTASIS</scope>
</reference>
<reference key="12">
    <citation type="journal article" date="2002" name="J. Clin. Invest.">
        <title>Bile acid-activated nuclear receptor FXR suppresses apolipoprotein A-I transcription via a negative FXR response element.</title>
        <authorList>
            <person name="Claudel T."/>
            <person name="Sturm E."/>
            <person name="Duez H."/>
            <person name="Torra I.P."/>
            <person name="Sirvent A."/>
            <person name="Kosykh V."/>
            <person name="Fruchart J.C."/>
            <person name="Dallongeville J."/>
            <person name="Hum D.W."/>
            <person name="Kuipers F."/>
            <person name="Staels B."/>
        </authorList>
    </citation>
    <scope>FUNCTION IN LIPID HOMEOSTASIS</scope>
</reference>
<reference key="13">
    <citation type="journal article" date="2002" name="Science">
        <title>Vitamin D receptor as an intestinal bile acid sensor.</title>
        <authorList>
            <person name="Makishima M."/>
            <person name="Lu T.T."/>
            <person name="Xie W."/>
            <person name="Whitfield G.K."/>
            <person name="Domoto H."/>
            <person name="Evans R.M."/>
            <person name="Haussler M.R."/>
            <person name="Mangelsdorf D.J."/>
        </authorList>
    </citation>
    <scope>FUNCTION</scope>
</reference>
<reference key="14">
    <citation type="journal article" date="2003" name="Genes Dev.">
        <title>Definition of a novel growth factor-dependent signal cascade for the suppression of bile acid biosynthesis.</title>
        <authorList>
            <person name="Holt J.A."/>
            <person name="Luo G."/>
            <person name="Billin A.N."/>
            <person name="Bisi J."/>
            <person name="McNeill Y.Y."/>
            <person name="Kozarsky K.F."/>
            <person name="Donahee M."/>
            <person name="Wang D.Y."/>
            <person name="Mansfield T.A."/>
            <person name="Kliewer S.A."/>
            <person name="Goodwin B."/>
            <person name="Jones S.A."/>
        </authorList>
    </citation>
    <scope>FUNCTION IN BA HOMEOSTASIS</scope>
</reference>
<reference key="15">
    <citation type="journal article" date="2003" name="Gastroenterology">
        <title>FXR induces the UGT2B4 enzyme in hepatocytes: a potential mechanism of negative feedback control of FXR activity.</title>
        <authorList>
            <person name="Barbier O."/>
            <person name="Torra I.P."/>
            <person name="Sirvent A."/>
            <person name="Claudel T."/>
            <person name="Blanquart C."/>
            <person name="Duran-Sandoval D."/>
            <person name="Kuipers F."/>
            <person name="Kosykh V."/>
            <person name="Fruchart J.C."/>
            <person name="Staels B."/>
        </authorList>
    </citation>
    <scope>FUNCTION IN BA HOMEOSTASIS</scope>
</reference>
<reference key="16">
    <citation type="journal article" date="2003" name="Gastroenterology">
        <title>Farnesoid X receptor agonists suppress hepatic apolipoprotein CIII expression.</title>
        <authorList>
            <person name="Claudel T."/>
            <person name="Inoue Y."/>
            <person name="Barbier O."/>
            <person name="Duran-Sandoval D."/>
            <person name="Kosykh V."/>
            <person name="Fruchart J."/>
            <person name="Fruchart J.C."/>
            <person name="Gonzalez F.J."/>
            <person name="Staels B."/>
        </authorList>
    </citation>
    <scope>FUNCTION IN LIPID HOMEOSTASIS</scope>
</reference>
<reference key="17">
    <citation type="journal article" date="2003" name="J. Biol. Chem.">
        <title>Syndecan-1 expression is regulated in an isoform-specific manner by the farnesoid-X receptor.</title>
        <authorList>
            <person name="Anisfeld A.M."/>
            <person name="Kast-Woelbern H.R."/>
            <person name="Meyer M.E."/>
            <person name="Jones S.A."/>
            <person name="Zhang Y."/>
            <person name="Williams K.J."/>
            <person name="Willson T."/>
            <person name="Edwards P.A."/>
        </authorList>
    </citation>
    <scope>FUNCTION IN LIPID HOMEOSTASIS</scope>
</reference>
<reference key="18">
    <citation type="journal article" date="2003" name="J. Biol. Chem.">
        <title>Farnesoid X receptor regulates bile acid-amino acid conjugation.</title>
        <authorList>
            <person name="Pircher P.C."/>
            <person name="Kitto J.L."/>
            <person name="Petrowski M.L."/>
            <person name="Tangirala R.K."/>
            <person name="Bischoff E.D."/>
            <person name="Schulman I.G."/>
            <person name="Westin S.K."/>
        </authorList>
    </citation>
    <scope>FUNCTION IN BA HOMEOSTASIS</scope>
</reference>
<reference key="19">
    <citation type="journal article" date="2003" name="Mol. Endocrinol.">
        <title>Bile acids induce the expression of the human peroxisome proliferator-activated receptor alpha gene via activation of the farnesoid X receptor.</title>
        <authorList>
            <person name="Pineda Torra I."/>
            <person name="Claudel T."/>
            <person name="Duval C."/>
            <person name="Kosykh V."/>
            <person name="Fruchart J.C."/>
            <person name="Staels B."/>
        </authorList>
    </citation>
    <scope>FUNCTION IN LIPID HOMEOSTASIS</scope>
</reference>
<reference key="20">
    <citation type="journal article" date="2004" name="Biochem. J.">
        <title>The nuclear bile acid receptor FXR is activated by PGC-1alpha in a ligand-dependent manner.</title>
        <authorList>
            <person name="Kanaya E."/>
            <person name="Shiraki T."/>
            <person name="Jingami H."/>
        </authorList>
    </citation>
    <scope>INTERACTION WITH PPARGC1A</scope>
</reference>
<reference key="21">
    <citation type="journal article" date="2004" name="J. Biol. Chem.">
        <title>The farnesoid X receptor controls gene expression in a ligand- and promoter-selective fashion.</title>
        <authorList>
            <person name="Lew J.L."/>
            <person name="Zhao A."/>
            <person name="Yu J."/>
            <person name="Huang L."/>
            <person name="De Pedro N."/>
            <person name="Pelaez F."/>
            <person name="Wright S.D."/>
            <person name="Cui J."/>
        </authorList>
    </citation>
    <scope>INTERACTION WITH NCOA1</scope>
    <scope>LIGAND-BINDING</scope>
</reference>
<reference key="22">
    <citation type="journal article" date="2004" name="Hepatology">
        <title>Bile acid-induced negative feedback regulation of the human ileal bile acid transporter.</title>
        <authorList>
            <person name="Neimark E."/>
            <person name="Chen F."/>
            <person name="Li X."/>
            <person name="Shneider B.L."/>
        </authorList>
    </citation>
    <scope>FUNCTION IN BA HOEMOSTASIS</scope>
</reference>
<reference key="23">
    <citation type="journal article" date="2004" name="J. Biol. Chem.">
        <title>Identification of DRIP205 as a coactivator for the Farnesoid X receptor.</title>
        <authorList>
            <person name="Pineda Torra I."/>
            <person name="Freedman L.P."/>
            <person name="Garabedian M.J."/>
        </authorList>
    </citation>
    <scope>INTERACTION WITH MED1</scope>
</reference>
<reference key="24">
    <citation type="journal article" date="2004" name="J. Biol. Chem.">
        <title>Bile acid reduces the secretion of very low density lipoprotein by repressing microsomal triglyceride transfer protein gene expression mediated by hepatocyte nuclear factor-4.</title>
        <authorList>
            <person name="Hirokane H."/>
            <person name="Nakahara M."/>
            <person name="Tachibana S."/>
            <person name="Shimizu M."/>
            <person name="Sato R."/>
        </authorList>
    </citation>
    <scope>FUNCTION IN LIPID HOMEOSTASIS</scope>
</reference>
<reference key="25">
    <citation type="journal article" date="2004" name="J. Biol. Chem.">
        <title>Ligand-dependent activation of the farnesoid X-receptor directs arginine methylation of histone H3 by CARM1.</title>
        <authorList>
            <person name="Ananthanarayanan M."/>
            <person name="Li S."/>
            <person name="Balasubramaniyan N."/>
            <person name="Suchy F.J."/>
            <person name="Walsh M.J."/>
        </authorList>
    </citation>
    <scope>FUNCTION IN BA HOMEOSTASIS</scope>
    <scope>INTERACTION WITH CARM1</scope>
</reference>
<reference key="26">
    <citation type="journal article" date="2005" name="Mol. Pharmacol.">
        <title>The methyl transferase PRMT1 functions as co-activator of farnesoid X receptor (FXR)/9-cis retinoid X receptor and regulates transcription of FXR responsive genes.</title>
        <authorList>
            <person name="Rizzo G."/>
            <person name="Renga B."/>
            <person name="Antonelli E."/>
            <person name="Passeri D."/>
            <person name="Pellicciari R."/>
            <person name="Fiorucci S."/>
        </authorList>
    </citation>
    <scope>INTERACTION WITH PRMT1</scope>
</reference>
<reference key="27">
    <citation type="journal article" date="2006" name="Am. J. Physiol.">
        <title>The nuclear receptor for bile acids, FXR, transactivates human organic solute transporter-alpha and -beta genes.</title>
        <authorList>
            <person name="Landrier J.-F."/>
            <person name="Eloranta J.J."/>
            <person name="Vavricka S.R."/>
            <person name="Kullak-Ublick G.A."/>
        </authorList>
    </citation>
    <scope>FUNCTION IN BA HOEMOSTASIS</scope>
</reference>
<reference key="28">
    <citation type="journal article" date="2006" name="Drug Metab. Pharmacokinet.">
        <title>Chenodeoxycholic acid-mediated activation of the farnesoid X receptor negatively regulates hydroxysteroid sulfotransferase.</title>
        <authorList>
            <person name="Miyata M."/>
            <person name="Matsuda Y."/>
            <person name="Tsuchiya H."/>
            <person name="Kitada H."/>
            <person name="Akase T."/>
            <person name="Shimada M."/>
            <person name="Nagata K."/>
            <person name="Gonzalez F.J."/>
            <person name="Yamazoe Y."/>
        </authorList>
    </citation>
    <scope>FUNCTION IN BA HOEMOSTASIS</scope>
</reference>
<reference key="29">
    <citation type="journal article" date="2007" name="Gastroenterology">
        <title>Functional variants of the central bile acid sensor FXR identified in intrahepatic cholestasis of pregnancy.</title>
        <authorList>
            <person name="Van Mil S.W."/>
            <person name="Milona A."/>
            <person name="Dixon P.H."/>
            <person name="Mullenbach R."/>
            <person name="Geenes V.L."/>
            <person name="Chambers J."/>
            <person name="Shevchuk V."/>
            <person name="Moore G.E."/>
            <person name="Lammert F."/>
            <person name="Glantz A.G."/>
            <person name="Mattsson L.A."/>
            <person name="Whittaker J."/>
            <person name="Parker M.G."/>
            <person name="White R."/>
            <person name="Williamson C."/>
        </authorList>
    </citation>
    <scope>POSSIBLE INVOLVEMENT IN INTRAHEPATIC CHOLESTASIS OF PREGNANCY</scope>
</reference>
<reference key="30">
    <citation type="journal article" date="2007" name="Proc. Natl. Acad. Sci. U.S.A.">
        <title>Involvement of corepressor complex subunit GPS2 in transcriptional pathways governing human bile acid biosynthesis.</title>
        <authorList>
            <person name="Sanyal S."/>
            <person name="Baavner A."/>
            <person name="Haroniti A."/>
            <person name="Nilsson L.M."/>
            <person name="Lundaasen T."/>
            <person name="Rehnmark S."/>
            <person name="Witt M.R."/>
            <person name="Einarsson C."/>
            <person name="Talianidis I."/>
            <person name="Gustafsson J.A."/>
            <person name="Treuter E."/>
        </authorList>
    </citation>
    <scope>FUNCTION IN BA HEMOSTASIS</scope>
    <scope>INTERACTION WITH GPS2</scope>
</reference>
<reference key="31">
    <citation type="journal article" date="2008" name="Hepatology">
        <title>The membrane protein ATPase class I type 8B member 1 signals through protein kinase C zeta to activate the farnesoid X receptor.</title>
        <authorList>
            <person name="Frankenberg T."/>
            <person name="Miloh T."/>
            <person name="Chen F.Y."/>
            <person name="Ananthanarayanan M."/>
            <person name="Sun A.Q."/>
            <person name="Balasubramaniyan N."/>
            <person name="Arias I."/>
            <person name="Setchell K.D."/>
            <person name="Suchy F.J."/>
            <person name="Shneider B.L."/>
        </authorList>
    </citation>
    <scope>PHOSPHORYLATION AT THR-456</scope>
    <scope>MUTAGENESIS OF THR-456</scope>
</reference>
<reference key="32">
    <citation type="journal article" date="2008" name="J. Hepatol.">
        <title>Variation of the gene encoding the nuclear bile salt receptor FXR and gallstone susceptibility in mice and humans.</title>
        <authorList>
            <person name="Kovacs P."/>
            <person name="Kress R."/>
            <person name="Rocha J."/>
            <person name="Kurtz U."/>
            <person name="Miquel J.F."/>
            <person name="Nervi F."/>
            <person name="Mendez-Sanchez N."/>
            <person name="Uribe M."/>
            <person name="Bock H.H."/>
            <person name="Schirin-Sokhan R."/>
            <person name="Stumvoll M."/>
            <person name="Moessner J."/>
            <person name="Lammert F."/>
            <person name="Wittenburg H."/>
        </authorList>
    </citation>
    <scope>POSSIBLE INVOLVEMENT IN CHOLESTEROL CHOLELITHIASIS</scope>
</reference>
<reference key="33">
    <citation type="journal article" date="2008" name="Mol. Endocrinol.">
        <title>Phosphorylation of farnesoid X receptor by protein kinase C promotes its transcriptional activity.</title>
        <authorList>
            <person name="Gineste R."/>
            <person name="Sirvent A."/>
            <person name="Paumelle R."/>
            <person name="Helleboid S."/>
            <person name="Aquilina A."/>
            <person name="Darteil R."/>
            <person name="Hum D.W."/>
            <person name="Fruchart J.C."/>
            <person name="Staels B."/>
        </authorList>
    </citation>
    <scope>PHOSPHORYLATION AT SER-145 AND SER-164</scope>
    <scope>INTERACTION WITH PPARGC1A</scope>
    <scope>MUTAGENESIS OF SER-145 AND SER-164</scope>
</reference>
<reference key="34">
    <citation type="journal article" date="2009" name="Biochem. Biophys. Res. Commun.">
        <title>Ku proteins function as corepressors to regulate farnesoid X receptor-mediated gene expression.</title>
        <authorList>
            <person name="Ohno M."/>
            <person name="Kunimoto M."/>
            <person name="Nishizuka M."/>
            <person name="Osada S."/>
            <person name="Imagawa M."/>
        </authorList>
    </citation>
    <scope>INTERACTION WITH XRCC5 AND XRCC6</scope>
</reference>
<reference key="35">
    <citation type="journal article" date="2009" name="Biochim. Biophys. Acta">
        <title>Reciprocal regulation of the bile acid-activated receptor FXR and the interferon-gamma-STAT-1 pathway in macrophages.</title>
        <authorList>
            <person name="Renga B."/>
            <person name="Migliorati M."/>
            <person name="Mencarelli A."/>
            <person name="Fiorucci S."/>
        </authorList>
    </citation>
    <scope>TISSUE SPECIFICITY</scope>
</reference>
<reference key="36">
    <citation type="journal article" date="2009" name="Cell Metab.">
        <title>FXR acetylation is normally dynamically regulated by p300 and SIRT1 but constitutively elevated in metabolic disease states.</title>
        <authorList>
            <person name="Kemper J.K."/>
            <person name="Xiao Z."/>
            <person name="Ponugoti B."/>
            <person name="Miao J."/>
            <person name="Fang S."/>
            <person name="Kanamaluru D."/>
            <person name="Tsang S."/>
            <person name="Wu S.Y."/>
            <person name="Chiang C.M."/>
            <person name="Veenstra T.D."/>
        </authorList>
    </citation>
    <scope>ACETYLATION AT LYS-167 AND LYS-227 BY EP300</scope>
</reference>
<reference key="37">
    <citation type="journal article" date="2009" name="J. Immunol.">
        <title>The bile acid receptor FXR is a modulator of intestinal innate immunity.</title>
        <authorList>
            <person name="Vavassori P."/>
            <person name="Mencarelli A."/>
            <person name="Renga B."/>
            <person name="Distrutti E."/>
            <person name="Fiorucci S."/>
        </authorList>
    </citation>
    <scope>FUNCTION IN INTESTINAL INNATE IMMUNITY</scope>
    <scope>TISSUE SPECIFICITY</scope>
    <scope>SUBCELLULAR LOCATION</scope>
    <scope>SUMOYLATION</scope>
</reference>
<reference key="38">
    <citation type="journal article" date="2009" name="Hepatology">
        <title>Bile acids activate fibroblast growth factor 19 signaling in human hepatocytes to inhibit cholesterol 7alpha-hydroxylase gene expression.</title>
        <authorList>
            <person name="Song K.H."/>
            <person name="Li T."/>
            <person name="Owsley E."/>
            <person name="Strom S."/>
            <person name="Chiang J.Y."/>
        </authorList>
    </citation>
    <scope>FUNCTION IN BA HOMEOSTASIS</scope>
</reference>
<reference key="39">
    <citation type="journal article" date="2009" name="Mol. Cell. Biol.">
        <title>Functional specificities of Brm and Brg-1 Swi/Snf ATPases in the feedback regulation of hepatic bile acid biosynthesis.</title>
        <authorList>
            <person name="Miao J."/>
            <person name="Fang S."/>
            <person name="Lee J."/>
            <person name="Comstock C."/>
            <person name="Knudsen K.E."/>
            <person name="Kemper J.K."/>
        </authorList>
    </citation>
    <scope>INTERACTION WITH SMARCA4</scope>
</reference>
<reference key="40">
    <citation type="journal article" date="2009" name="Mol. Endocrinol.">
        <title>ASCOM controls farnesoid X receptor transactivation through its associated histone H3 lysine 4 methyltransferase activity.</title>
        <authorList>
            <person name="Kim D.H."/>
            <person name="Lee J."/>
            <person name="Lee B."/>
            <person name="Lee J.W."/>
        </authorList>
    </citation>
    <scope>INTERACTION WITH PAGR1 AND NCOA6</scope>
</reference>
<reference key="41">
    <citation type="journal article" date="2010" name="FEBS Lett.">
        <title>The nuclear receptor FXR is expressed in pancreatic beta-cells and protects human islets from lipotoxicity.</title>
        <authorList>
            <person name="Popescu I.R."/>
            <person name="Helleboid-Chapman A."/>
            <person name="Lucas A."/>
            <person name="Vandewalle B."/>
            <person name="Dumont J."/>
            <person name="Bouchaert E."/>
            <person name="Derudas B."/>
            <person name="Kerr-Conte J."/>
            <person name="Caron S."/>
            <person name="Pattou F."/>
            <person name="Staels B."/>
        </authorList>
    </citation>
    <scope>FUNCTION IN GLUCOSE HOMEOSTASIS</scope>
    <scope>TISSUE SPECIFICITY</scope>
</reference>
<reference key="42">
    <citation type="journal article" date="2010" name="Nucl. Recept. Signal.">
        <title>Deciphering the nuclear bile acid receptor FXR paradigm.</title>
        <authorList>
            <person name="Modica S."/>
            <person name="Gadaleta R.M."/>
            <person name="Moschetta A."/>
        </authorList>
    </citation>
    <scope>REVIEW</scope>
</reference>
<reference key="43">
    <citation type="journal article" date="2011" name="Gut">
        <title>Farnesoid X receptor activation inhibits inflammation and preserves the intestinal barrier in inflammatory bowel disease.</title>
        <authorList>
            <person name="Gadaleta R.M."/>
            <person name="van Erpecum K.J."/>
            <person name="Oldenburg B."/>
            <person name="Willemsen E.C."/>
            <person name="Renooij W."/>
            <person name="Murzilli S."/>
            <person name="Klomp L.W."/>
            <person name="Siersema P.D."/>
            <person name="Schipper M.E."/>
            <person name="Danese S."/>
            <person name="Penna G."/>
            <person name="Laverny G."/>
            <person name="Adorini L."/>
            <person name="Moschetta A."/>
            <person name="van Mil S.W."/>
        </authorList>
    </citation>
    <scope>FUNCTION IN INTESTINAL INFLAMMATION</scope>
</reference>
<reference key="44">
    <citation type="journal article" date="2011" name="J. Clin. Invest.">
        <title>Farnesoid X receptor represses hepatic human APOA gene expression.</title>
        <authorList>
            <person name="Chennamsetty I."/>
            <person name="Claudel T."/>
            <person name="Kostner K.M."/>
            <person name="Baghdasaryan A."/>
            <person name="Kratky D."/>
            <person name="Levak-Frank S."/>
            <person name="Frank S."/>
            <person name="Gonzalez F.J."/>
            <person name="Trauner M."/>
            <person name="Kostner G.M."/>
        </authorList>
    </citation>
    <scope>FUNCTION IN LIPID HOMEOSTASIS</scope>
</reference>
<reference key="45">
    <citation type="journal article" date="2012" name="Biochim. Biophys. Acta">
        <title>Anti-inflammatory and metabolic actions of FXR: insights into molecular mechanisms.</title>
        <authorList>
            <person name="Hollman D.A."/>
            <person name="Milona A."/>
            <person name="van Erpecum K.J."/>
            <person name="van Mil S.W."/>
        </authorList>
    </citation>
    <scope>REVIEW</scope>
</reference>
<reference key="46">
    <citation type="journal article" date="2012" name="Am. J. Physiol.">
        <title>Direct methylation of FXR by Set7/9, a lysine methyltransferase, regulates the expression of FXR target genes.</title>
        <authorList>
            <person name="Balasubramaniyan N."/>
            <person name="Ananthanarayanan M."/>
            <person name="Suchy F.J."/>
        </authorList>
    </citation>
    <scope>METHYLATION AT LYS-220 BY SETD7</scope>
</reference>
<reference key="47">
    <citation type="journal article" date="2012" name="Cochrane Database Syst. Rev.">
        <title>Ursodeoxycholic acid for primary biliary cirrhosis.</title>
        <authorList>
            <person name="Rudic J.S."/>
            <person name="Poropat G."/>
            <person name="Krstic M.N."/>
            <person name="Bjelakovic G."/>
            <person name="Gluud C."/>
        </authorList>
    </citation>
    <scope>POSSIBLE INVOLVEMENT IN PRIMARY BILIARY CIRRHOSIS</scope>
</reference>
<reference key="48">
    <citation type="journal article" date="2013" name="Biochem. Pharmacol.">
        <title>Differential activation of the human farnesoid X receptor depends on the pattern of expressed isoforms and the bile acid pool composition.</title>
        <authorList>
            <person name="Vaquero J."/>
            <person name="Monte M.J."/>
            <person name="Dominguez M."/>
            <person name="Muntane J."/>
            <person name="Marin J.J."/>
        </authorList>
    </citation>
    <scope>TISSUE SPECIFICITY</scope>
    <scope>SUBCELLULAR LOCATION</scope>
    <scope>FUNCTION</scope>
</reference>
<reference key="49">
    <citation type="journal article" date="2013" name="J. Biol. Chem.">
        <title>SUMOylation of the farnesoid X receptor (FXR) regulates the expression of FXR target genes.</title>
        <authorList>
            <person name="Balasubramaniyan N."/>
            <person name="Luo Y."/>
            <person name="Sun A.Q."/>
            <person name="Suchy F.J."/>
        </authorList>
    </citation>
    <scope>SUMOYLATION AT LYS-132 AND LYS-289</scope>
    <scope>MUTAGENESIS OF LYS-132; LYS-289 AND GLU-291</scope>
</reference>
<reference key="50">
    <citation type="journal article" date="2013" name="Mol. Pharmacol.">
        <title>Identification of functionally relevant lysine residues that modulate human farnesoid X receptor activation.</title>
        <authorList>
            <person name="Sun A.Q."/>
            <person name="Luo Y."/>
            <person name="Backos D.S."/>
            <person name="Xu S."/>
            <person name="Balasubramaniyan N."/>
            <person name="Reigan P."/>
            <person name="Suchy F.J."/>
        </authorList>
    </citation>
    <scope>MUTAGENESIS OF LYS-132; LYS-167; LYS-220; LYS-227; LYS-353 AND LYS-474</scope>
    <scope>INTERACTION WITH RXRA AND SETD7</scope>
</reference>
<reference key="51">
    <citation type="journal article" date="2016" name="Nat. Commun.">
        <title>Mutations in the nuclear bile acid receptor FXR cause progressive familial intrahepatic cholestasis.</title>
        <authorList>
            <person name="Gomez-Ospina N."/>
            <person name="Potter C.J."/>
            <person name="Xiao R."/>
            <person name="Manickam K."/>
            <person name="Kim M.S."/>
            <person name="Kim K.H."/>
            <person name="Shneider B.L."/>
            <person name="Picarsic J.L."/>
            <person name="Jacobson T.A."/>
            <person name="Zhang J."/>
            <person name="He W."/>
            <person name="Liu P."/>
            <person name="Knisely A.S."/>
            <person name="Finegold M.J."/>
            <person name="Muzny D.M."/>
            <person name="Boerwinkle E."/>
            <person name="Lupski J.R."/>
            <person name="Plon S.E."/>
            <person name="Gibbs R.A."/>
            <person name="Eng C.M."/>
            <person name="Yang Y."/>
            <person name="Washington G.C."/>
            <person name="Porteus M.H."/>
            <person name="Berquist W.E."/>
            <person name="Kambham N."/>
            <person name="Singh R.J."/>
            <person name="Xia F."/>
            <person name="Enns G.M."/>
            <person name="Moore D.D."/>
        </authorList>
    </citation>
    <scope>INVOLVEMENT IN PFIC5</scope>
    <scope>VARIANT PFIC5 LYS-149 INS</scope>
    <scope>CHARACTERIZATION OF VARIANT PFIC5 LYS-149 INS (ISOFORM 4)</scope>
    <scope>FUNCTION (ISOFORM 4)</scope>
</reference>
<reference key="52">
    <citation type="journal article" date="2003" name="Mol. Cell">
        <title>A chemical, genetic, and structural analysis of the nuclear bile acid receptor FXR.</title>
        <authorList>
            <person name="Downes M."/>
            <person name="Verdecia M.A."/>
            <person name="Roecker A.J."/>
            <person name="Hughes R."/>
            <person name="Hogenesch J.B."/>
            <person name="Kast-Woelbern H.R."/>
            <person name="Bowman M.E."/>
            <person name="Ferrer J.L."/>
            <person name="Anisfeld A.M."/>
            <person name="Edwards P.A."/>
            <person name="Rosenfeld J.M."/>
            <person name="Alvarez J.G."/>
            <person name="Noel J.P."/>
            <person name="Nicolaou K.C."/>
            <person name="Evans R.M."/>
        </authorList>
    </citation>
    <scope>X-RAY CRYSTALLOGRAPHY (1.8 ANGSTROMS) OF 258-476 IN COMPLEX WITH SYNTHETIC AGONIST FEXARAMINE</scope>
    <scope>FUNCTION</scope>
    <scope>INTERACTION WITH NCOA1</scope>
</reference>
<reference key="53">
    <citation type="journal article" date="2003" name="Mol. Cell">
        <title>Structural basis for bile acid binding and activation of the nuclear receptor FXR.</title>
        <authorList>
            <person name="Mi L.Z."/>
            <person name="Devarakonda S."/>
            <person name="Harp J.M."/>
            <person name="Han Q."/>
            <person name="Pellicciari R."/>
            <person name="Willson T.M."/>
            <person name="Khorasanizadeh S."/>
            <person name="Rastinejad F."/>
        </authorList>
    </citation>
    <scope>X-RAY CRYSTALLOGRAPHY (2.5 ANGSTROMS) OF 241-469 IN COMPLEXES WITH CHENODEOXYCHOLIC ACID ANALOGS AND NCOA2 COACTIVATOR PEPTIDE</scope>
</reference>
<reference key="54">
    <citation type="journal article" date="2008" name="Bioorg. Med. Chem. Lett.">
        <title>Conformationally constrained farnesoid X receptor (FXR) agonists: Naphthoic acid-based analogs of GW 4064.</title>
        <authorList>
            <person name="Akwabi-Ameyaw A."/>
            <person name="Bass J.Y."/>
            <person name="Caldwell R.D."/>
            <person name="Caravella J.A."/>
            <person name="Chen L."/>
            <person name="Creech K.L."/>
            <person name="Deaton D.N."/>
            <person name="Jones S.A."/>
            <person name="Kaldor I."/>
            <person name="Liu Y."/>
            <person name="Madauss K.P."/>
            <person name="Marr H.B."/>
            <person name="McFadyen R.B."/>
            <person name="Miller A.B."/>
            <person name="Iii F.N."/>
            <person name="Parks D.J."/>
            <person name="Spearing P.K."/>
            <person name="Todd D."/>
            <person name="Williams S.P."/>
            <person name="Wisely G.B."/>
        </authorList>
    </citation>
    <scope>X-RAY CRYSTALLOGRAPHY (2.5 ANGSTROMS) OF 252-486 IN COMPLEX WITH SYNTHETIC AGONIST</scope>
    <scope>FUNCTION</scope>
    <scope>INTERACTION WITH NCOA1</scope>
</reference>
<reference key="55">
    <citation type="journal article" date="2008" name="Proc. Natl. Acad. Sci. U.S.A.">
        <title>Identification of a potent synthetic FXR agonist with an unexpected mode of binding and activation.</title>
        <authorList>
            <person name="Soisson S.M."/>
            <person name="Parthasarathy G."/>
            <person name="Adams A.D."/>
            <person name="Sahoo S."/>
            <person name="Sitlani A."/>
            <person name="Sparrow C."/>
            <person name="Cui J."/>
            <person name="Becker J.W."/>
        </authorList>
    </citation>
    <scope>X-RAY CRYSTALLOGRAPHY (1.9 ANGSTROMS) OF 249-486 IN COMPLEX WITH STEROID ANALOG MFA-1 AND NCOA1 PEPTIDE</scope>
    <scope>INTERACTION WITH NCOA1</scope>
    <scope>DOMAIN</scope>
</reference>
<reference key="56">
    <citation type="journal article" date="2009" name="Bioorg. Med. Chem. Lett.">
        <title>Substituted isoxazole analogs of farnesoid X receptor (FXR) agonist GW4064.</title>
        <authorList>
            <person name="Bass J.Y."/>
            <person name="Caldwell R.D."/>
            <person name="Caravella J.A."/>
            <person name="Chen L."/>
            <person name="Creech K.L."/>
            <person name="Deaton D.N."/>
            <person name="Madauss K.P."/>
            <person name="Marr H.B."/>
            <person name="McFadyen R.B."/>
            <person name="Miller A.B."/>
            <person name="Parks D.J."/>
            <person name="Todd D."/>
            <person name="Williams S.P."/>
            <person name="Wisely G.B."/>
        </authorList>
    </citation>
    <scope>X-RAY CRYSTALLOGRAPHY (3.2 ANGSTROMS) OF 260-486 IN COMPLEX WITH SYNTHETIC AGONIST</scope>
    <scope>FUNCTION</scope>
    <scope>INTERACTION WITH NCOA1</scope>
</reference>
<reference key="57">
    <citation type="journal article" date="2009" name="Bioorg. Med. Chem. Lett.">
        <title>FXR agonist activity of conformationally constrained analogs of GW 4064.</title>
        <authorList>
            <person name="Akwabi-Ameyaw A."/>
            <person name="Bass J.Y."/>
            <person name="Caldwell R.D."/>
            <person name="Caravella J.A."/>
            <person name="Chen L."/>
            <person name="Creech K.L."/>
            <person name="Deaton D.N."/>
            <person name="Madauss K.P."/>
            <person name="Marr H.B."/>
            <person name="McFadyen R.B."/>
            <person name="Miller A.B."/>
            <person name="Navas F. III"/>
            <person name="Parks D.J."/>
            <person name="Spearing P.K."/>
            <person name="Todd D."/>
            <person name="Williams S.P."/>
            <person name="Bruce Wisely G."/>
        </authorList>
    </citation>
    <scope>X-RAY CRYSTALLOGRAPHY (2.6 ANGSTROMS) OF 257-486 IN COMPLEX WITH SYNTHETIC AGONIST</scope>
    <scope>FUNCTION</scope>
    <scope>INTERACTION WITH NCOA1</scope>
</reference>
<reference key="58">
    <citation type="journal article" date="2009" name="J. Med. Chem.">
        <title>Discovery of XL335 (WAY-362450), a highly potent, selective, and orally active agonist of the farnesoid X receptor (FXR).</title>
        <authorList>
            <person name="Flatt B."/>
            <person name="Martin R."/>
            <person name="Wang T.L."/>
            <person name="Mahaney P."/>
            <person name="Murphy B."/>
            <person name="Gu X.H."/>
            <person name="Foster P."/>
            <person name="Li J."/>
            <person name="Pircher P."/>
            <person name="Petrowski M."/>
            <person name="Schulman I."/>
            <person name="Westin S."/>
            <person name="Wrobel J."/>
            <person name="Yan G."/>
            <person name="Bischoff E."/>
            <person name="Daige C."/>
            <person name="Mohan R."/>
        </authorList>
    </citation>
    <scope>X-RAY CRYSTALLOGRAPHY (2.0 ANGSTROMS) OF 258-486 IN COMPLEX WITH SYNTHETIC AGONIST</scope>
</reference>
<reference key="59">
    <citation type="journal article" date="2010" name="J. Med. Chem.">
        <title>Improvement of physiochemical properties of the tetrahydroazepinoindole series of farnesoid X receptor (FXR) agonists: beneficial modulation of lipids in primates.</title>
        <authorList>
            <person name="Lundquist J.T."/>
            <person name="Harnish D.C."/>
            <person name="Kim C.Y."/>
            <person name="Mehlmann J.F."/>
            <person name="Unwalla R.J."/>
            <person name="Phipps K.M."/>
            <person name="Crawley M.L."/>
            <person name="Commons T."/>
            <person name="Green D.M."/>
            <person name="Xu W."/>
            <person name="Hum W.T."/>
            <person name="Eta J.E."/>
            <person name="Feingold I."/>
            <person name="Patel V."/>
            <person name="Evans M.J."/>
            <person name="Lai K."/>
            <person name="Borges-Marcucci L."/>
            <person name="Mahaney P.E."/>
            <person name="Wrobel J.E."/>
        </authorList>
    </citation>
    <scope>X-RAY CRYSTALLOGRAPHY (1.9 ANGSTROMS) OF 248-476 IN COMPLEX WITH SYNTHETIC AGONIST</scope>
</reference>
<reference evidence="62" key="60">
    <citation type="journal article" date="2018" name="J. Biol. Chem.">
        <title>Ligand binding and heterodimerization with retinoid X receptor alpha (RXRalpha) induce farnesoid X receptor (FXR) conformational changes affecting coactivator binding.</title>
        <authorList>
            <person name="Wang N."/>
            <person name="Zou Q."/>
            <person name="Xu J."/>
            <person name="Zhang J."/>
            <person name="Liu J."/>
        </authorList>
    </citation>
    <scope>X-RAY CRYSTALLOGRAPHY (2.10 ANGSTROMS) OF 258-485 IN COMPLEX WITH RXRA; SYNTHETIC AGONISTS AND NCOA1 PEPTIDE</scope>
    <scope>MUTAGENESIS OF ARG-455</scope>
</reference>
<organism>
    <name type="scientific">Homo sapiens</name>
    <name type="common">Human</name>
    <dbReference type="NCBI Taxonomy" id="9606"/>
    <lineage>
        <taxon>Eukaryota</taxon>
        <taxon>Metazoa</taxon>
        <taxon>Chordata</taxon>
        <taxon>Craniata</taxon>
        <taxon>Vertebrata</taxon>
        <taxon>Euteleostomi</taxon>
        <taxon>Mammalia</taxon>
        <taxon>Eutheria</taxon>
        <taxon>Euarchontoglires</taxon>
        <taxon>Primates</taxon>
        <taxon>Haplorrhini</taxon>
        <taxon>Catarrhini</taxon>
        <taxon>Hominidae</taxon>
        <taxon>Homo</taxon>
    </lineage>
</organism>
<gene>
    <name type="primary">NR1H4</name>
    <name type="synonym">BAR</name>
    <name type="synonym">FXR</name>
    <name type="synonym">HRR1</name>
    <name type="synonym">RIP14</name>
</gene>
<comment type="function">
    <text evidence="1 2 5 6 7 8 9 10 11 12 14 15 16 17 18 21 22 23 25 26 27 29 32 35 37 40 41 42 43 47 58 59">Ligand-activated transcription factor. Receptor for bile acids (BAs) such as chenodeoxycholic acid (CDCA), lithocholic acid, deoxycholic acid (DCA) and allocholic acid (ACA). Plays a essential role in BA homeostasis through the regulation of genes involved in BA synthesis, conjugation and enterohepatic circulation. Also regulates lipid and glucose homeostasis and is involved innate immune response (PubMed:10334992, PubMed:10334993, PubMed:21383957, PubMed:22820415). The FXR-RXR heterodimer binds predominantly to farnesoid X receptor response elements (FXREs) containing two inverted repeats of the consensus sequence 5'-AGGTCA-3' in which the monomers are spaced by 1 nucleotide (IR-1) but also to tandem repeat DR1 sites with lower affinity, and can be activated by either FXR or RXR-specific ligands. It is proposed that monomeric nuclear receptors such as NR5A2/LRH-1 bound to coregulatory nuclear responsive element (NRE) halfsites located in close proximity to FXREs modulate transcriptional activity (By similarity). In the liver activates transcription of the corepressor NR0B2 thereby indirectly inhibiting CYP7A1 and CYP8B1 (involved in BA synthesis) implicating at least in part histone demethylase KDM1A resulting in epigenomic repression, and SLC10A1/NTCP (involved in hepatic uptake of conjugated BAs). Activates transcription of the repressor MAFG (involved in regulation of BA synthesis) (By similarity). Activates transcription of SLC27A5/BACS and BAAT (involved in BA conjugation), ABCB11/BSEP (involved in bile salt export) by directly recruiting histone methyltransferase CARM1, and ABCC2/MRP2 (involved in secretion of conjugated BAs) and ABCB4 (involved in secretion of phosphatidylcholine in the small intestine) (PubMed:12754200, PubMed:15471871, PubMed:17895379). Activates transcription of SLC27A5/BACS and BAAT (involved in BA conjugation), ABCB11/BSEP (involved in bile salt export) by directly recruiting histone methyltransferase CARM1, and ABCC2/MRP2 (involved in secretion of conjugated BAs) and ABCB4 (involved in secretion of phosphatidylcholine in the small intestine) (PubMed:10514450, PubMed:15239098, PubMed:16269519). In the intestine activates FGF19 expression and secretion leading to hepatic CYP7A1 repression (PubMed:12815072, PubMed:19085950). The function also involves the coordinated induction of hepatic KLB/beta-klotho expression (By similarity). Regulates transcription of liver UGT2B4 and SULT2A1 involved in BA detoxification; binding to the UGT2B4 promoter seems to imply a monomeric transactivation independent of RXRA (PubMed:12806625, PubMed:16946559). Modulates lipid homeostasis by activating liver NR0B2/SHP-mediated repression of SREBF1 (involved in de novo lipogenesis), expression of PLTP (involved in HDL formation), SCARB1 (involved in HDL hepatic uptake), APOE, APOC1, APOC4, PPARA (involved in beta-oxidation of fatty acids), VLDLR and SDC1 (involved in the hepatic uptake of LDL and IDL remnants), and inhibiting expression of MTTP (involved in VLDL assembly (PubMed:12554753, PubMed:12660231, PubMed:15337761). Increases expression of APOC2 (promoting lipoprotein lipase activity implicated in triglyceride clearance) (PubMed:11579204). Transrepresses APOA1 involving a monomeric competition with NR2A1 for binding to a DR1 element (PubMed:11927623, PubMed:21804189). Also reduces triglyceride clearance by inhibiting expression of ANGPTL3 and APOC3 (both involved in inhibition of lipoprotein lipase) (PubMed:12891557). Involved in glucose homeostasis by modulating hepatic gluconeogenesis through activation of NR0B2/SHP-mediated repression of respective genes. Modulates glycogen synthesis (inducing phosphorylation of glycogen synthase kinase-3) (By similarity). Modulates glucose-stimulated insulin secretion and is involved in insulin resistance (PubMed:20447400). Involved in intestinal innate immunity. Plays a role in protecting the distal small intestine against bacterial overgrowth and preservation of the epithelial barrier (By similarity). Down-regulates inflammatory cytokine expression in several types of immune cells including macrophages and mononuclear cells (PubMed:21242261). Mediates trans-repression of TLR4-induced cytokine expression; the function seems to require its sumoylation and prevents N-CoR nuclear receptor corepressor clearance from target genes such as IL1B and NOS2 (PubMed:19864602). Involved in the TLR9-mediated protective mechanism in intestinal inflammation. Plays an anti-inflammatory role in liver inflammation; proposed to inhibit pro-inflammatory (but not antiapoptotic) NF-kappa-B signaling) (By similarity).</text>
</comment>
<comment type="function">
    <molecule>Isoform 1</molecule>
    <text evidence="47">Promotes transcriptional activation of target genes NR0B2/SHP (inducible by unconjugated CDCA), SLC51B/OSTB (inducible by unconjugated CDCA and DCA) and FABP6/IBAP; low activity for ABCB11/BSEP (inducible by unconjugated CDCA, DCA and ACA); not inducible by taurine- and glycine-amidated CDCA.</text>
</comment>
<comment type="function">
    <molecule>Isoform 2</molecule>
    <text evidence="47">Promotes transcriptional activation of target genes ABCB11/BSEP (inducible by unconjugated CDCA, DCA and ACA), NR0B2/SHP (inducible by unconjugated CDCA DCA and ACA), SLC51B/OSTB (inducible by unconjugated CDCA and DCA) and FABP6/IBAP; not inducible by taurine- and glycine-amidated CDCA.</text>
</comment>
<comment type="function">
    <molecule>Isoform 3</molecule>
    <text evidence="47">Promotes transcriptional activation of target genes NR0B2/SHP (inducible by unconjugated CDCA), SLC51B/OSTB (inducible by unconjugated CDCA and DCA) and IBAP; low activity for ABCB11/BSEP (inducible by unconjugated CDCA, DCA and ACA); not inducible by taurine- and glycine-amidated CDCA.</text>
</comment>
<comment type="function">
    <molecule>Isoform 4</molecule>
    <text evidence="47 48">Promotes transcriptional activation of target genes ABCB11/BSEP (inducible by unconjugated CDCA, ACA and DCA), NR0B2/SHP (inducible by unconjugated CDCA, ACA and DCA), SLC51B/OSTB (inducible by unconjugated CDCA and DCA) and FABP6/IBAP; most efficient isoform compared to isoforms 1 to 3; not inducible by taurine- and glycine-amidated CDCA.</text>
</comment>
<comment type="subunit">
    <text evidence="1 2 12 13 18 19 20 23 24 27 28 29 33 35 36 37 38 39 45 49">Heterodimer (via C-terminus) with RXRA (via DBD); the heterodimerization enhances the binding affinity for LXXLL motifs from coactivators (PubMed:23462506, PubMed:30275017). Binds DNA predominantly as a heterodimer with RXRA. After activation by agonist binding interacts with coactivators. Interacts with NCOA1, NCOA2, PPARGC1A, CARM1, SETD7, PRMT1, GPS2, SMARCA4 and MED1 (PubMed:12718892, PubMed:12718893, PubMed:14684751, PubMed:15187081, PubMed:15202934, PubMed:15471871, PubMed:15911693, PubMed:17895379, PubMed:18391212, PubMed:18621523, PubMed:18755856, PubMed:19410460, PubMed:19586769, PubMed:19805516, PubMed:23462506). Interacts with EP300 and SMARCD1 (By similarity). Interacts with XRCC5 and XRCC6; decreasing NR1H4/FXR transactivation activity towards ABCB11/BSEP (PubMed:19833092). Interacts with PAGR1 and NCOA6; indicative for an association with an MLL2/MLL3 complex (ASCOM) (PubMed:19556342).</text>
</comment>
<comment type="interaction">
    <interactant intactId="EBI-1250177">
        <id>Q96RI1</id>
    </interactant>
    <interactant intactId="EBI-455189">
        <id>Q15788</id>
        <label>NCOA1</label>
    </interactant>
    <organismsDiffer>false</organismsDiffer>
    <experiments>4</experiments>
</comment>
<comment type="interaction">
    <interactant intactId="EBI-1250177">
        <id>Q96RI1</id>
    </interactant>
    <interactant intactId="EBI-10972034">
        <id>O75151</id>
        <label>PHF2</label>
    </interactant>
    <organismsDiffer>false</organismsDiffer>
    <experiments>2</experiments>
</comment>
<comment type="interaction">
    <interactant intactId="EBI-1250177">
        <id>Q96RI1</id>
    </interactant>
    <interactant intactId="EBI-1268586">
        <id>Q8WTS6</id>
        <label>SETD7</label>
    </interactant>
    <organismsDiffer>false</organismsDiffer>
    <experiments>5</experiments>
</comment>
<comment type="interaction">
    <interactant intactId="EBI-12417284">
        <id>Q96RI1-1</id>
    </interactant>
    <interactant intactId="EBI-748576">
        <id>P28702</id>
        <label>RXRB</label>
    </interactant>
    <organismsDiffer>false</organismsDiffer>
    <experiments>7</experiments>
</comment>
<comment type="interaction">
    <interactant intactId="EBI-12417284">
        <id>Q96RI1-1</id>
    </interactant>
    <interactant intactId="EBI-16429492">
        <id>P28702-3</id>
        <label>RXRB</label>
    </interactant>
    <organismsDiffer>false</organismsDiffer>
    <experiments>3</experiments>
</comment>
<comment type="interaction">
    <interactant intactId="EBI-12417284">
        <id>Q96RI1-1</id>
    </interactant>
    <interactant intactId="EBI-712405">
        <id>P48443</id>
        <label>RXRG</label>
    </interactant>
    <organismsDiffer>false</organismsDiffer>
    <experiments>3</experiments>
</comment>
<comment type="interaction">
    <interactant intactId="EBI-9640524">
        <id>Q96RI1-2</id>
    </interactant>
    <interactant intactId="EBI-455189">
        <id>Q15788</id>
        <label>NCOA1</label>
    </interactant>
    <organismsDiffer>false</organismsDiffer>
    <experiments>5</experiments>
</comment>
<comment type="interaction">
    <interactant intactId="EBI-9640524">
        <id>Q96RI1-2</id>
    </interactant>
    <interactant intactId="EBI-352053">
        <id>P78527</id>
        <label>PRKDC</label>
    </interactant>
    <organismsDiffer>false</organismsDiffer>
    <experiments>4</experiments>
</comment>
<comment type="interaction">
    <interactant intactId="EBI-10921781">
        <id>Q96RI1-3</id>
    </interactant>
    <interactant intactId="EBI-78473">
        <id>P03372</id>
        <label>ESR1</label>
    </interactant>
    <organismsDiffer>false</organismsDiffer>
    <experiments>2</experiments>
</comment>
<comment type="subcellular location">
    <subcellularLocation>
        <location evidence="40">Nucleus</location>
    </subcellularLocation>
</comment>
<comment type="subcellular location">
    <molecule>Isoform 1</molecule>
    <subcellularLocation>
        <location evidence="47">Nucleus</location>
    </subcellularLocation>
</comment>
<comment type="subcellular location">
    <molecule>Isoform 2</molecule>
    <subcellularLocation>
        <location evidence="47">Nucleus</location>
    </subcellularLocation>
</comment>
<comment type="subcellular location">
    <molecule>Isoform 3</molecule>
    <subcellularLocation>
        <location evidence="47">Nucleus</location>
    </subcellularLocation>
</comment>
<comment type="subcellular location">
    <molecule>Isoform 4</molecule>
    <subcellularLocation>
        <location evidence="47">Nucleus</location>
    </subcellularLocation>
</comment>
<comment type="alternative products">
    <event type="alternative promoter"/>
    <event type="alternative splicing"/>
    <isoform>
        <id>Q96RI1-3</id>
        <name>1</name>
        <name>FXRalpha2(+)</name>
        <name>FXRalpha1</name>
        <name>FXRbeta1</name>
        <sequence type="displayed"/>
    </isoform>
    <isoform>
        <id>Q96RI1-4</id>
        <name>2</name>
        <name>FXRalpha2(-)</name>
        <name>FXRalpha4</name>
        <name>FXRbeta2</name>
        <sequence type="described" ref="VSP_003665"/>
    </isoform>
    <isoform>
        <id>Q96RI1-1</id>
        <name>3</name>
        <name>FXRalpha1(+)</name>
        <name>FXRalpha1</name>
        <sequence type="described" ref="VSP_010135"/>
    </isoform>
    <isoform>
        <id>Q96RI1-2</id>
        <name>4</name>
        <name>FXRalpha1(-)</name>
        <name>FXRalpha2</name>
        <sequence type="described" ref="VSP_010135 VSP_003665"/>
    </isoform>
    <isoform>
        <id>Q96RI1-5</id>
        <name>5</name>
        <sequence type="described" ref="VSP_010135 VSP_044547"/>
    </isoform>
</comment>
<comment type="tissue specificity">
    <text evidence="34 40 41 47">Liver and hepatocyte-related cells express mainly FXRalpha1-type isoforms with isoform 3 and isoform 4 in approximately equal proportions. In intestine and kidney mainly FXRalpha2-type isoforms are expressed with isoform 1 and isoform 2 in approximately equal proportions. Expressed in pancreatic beta cells and macrophages.</text>
</comment>
<comment type="PTM">
    <text evidence="31">Acetylated by EP300. Lys-227 as is the major acetylation site for EP300; the dynamicly regulated acetylation inhibits heterodimerization with RXRA and transactivation activity. Deacetylated by SIRT1.</text>
</comment>
<comment type="PTM">
    <text evidence="44">Methylation may increase transactivation of target genes.</text>
</comment>
<comment type="PTM">
    <text evidence="31">Phosphorylation by PKC/PRKCA increases transactivation activity by promoting association with PPARGC1A.</text>
</comment>
<comment type="PTM">
    <text evidence="40 46">Sumoylated upon ligand binding.</text>
</comment>
<comment type="disease">
    <text evidence="55">May be involved in intrahepatic cholestasis of pregnancy.</text>
</comment>
<comment type="disease">
    <text evidence="56">May be involved in cholesterol cholelithiasis.</text>
</comment>
<comment type="disease" evidence="48">
    <disease id="DI-04774">
        <name>Cholestasis, progressive familial intrahepatic, 5</name>
        <acronym>PFIC5</acronym>
        <description>A disorder characterized by early onset of cholestasis that progresses to hepatic fibrosis, cirrhosis, and end-stage liver disease before adulthood. PFIC5 is an autosomal recessive, severe form characterized by onset of intralobular cholestasis in the neonatal period.</description>
        <dbReference type="MIM" id="617049"/>
    </disease>
    <text>The disease is caused by variants affecting the gene represented in this entry.</text>
</comment>
<comment type="miscellaneous">
    <text evidence="60">Ursodeoxycholic acid (UDCA), a natural agonist of FXR, is approved to treat primary biliary cirrhosis. However, effects are discussed controversial. UDCA is also used to dissolve (cholesterol) gallstones as alternative to surgery.</text>
</comment>
<comment type="miscellaneous">
    <molecule>Isoform 1</molecule>
    <text>Produced by alternative promoter usage.</text>
</comment>
<comment type="miscellaneous">
    <molecule>Isoform 2</molecule>
    <text evidence="54">Produced by alternative splicing of isoform 1.</text>
</comment>
<comment type="miscellaneous">
    <molecule>Isoform 3</molecule>
    <text evidence="54">Produced by alternative promoter usage.</text>
</comment>
<comment type="miscellaneous">
    <molecule>Isoform 4</molecule>
    <text evidence="54">Produced by alternative splicing of isoform 3.</text>
</comment>
<comment type="miscellaneous">
    <molecule>Isoform 5</molecule>
    <text evidence="54">Produced by alternative splicing of isoform 3.</text>
</comment>
<comment type="similarity">
    <text evidence="54">Belongs to the nuclear hormone receptor family. NR1 subfamily.</text>
</comment>
<comment type="sequence caution" evidence="54">
    <conflict type="frameshift">
        <sequence resource="EMBL" id="BC144183"/>
    </conflict>
</comment>
<comment type="online information" name="Wikipedia">
    <link uri="https://en.wikipedia.org/wiki/Farnesoid_X_receptor"/>
    <text>Farnesoid X receptor entry</text>
</comment>
<name>NR1H4_HUMAN</name>
<sequence length="486" mass="55914">MVMQFQGLENPIQISPHCSCTPSGFFMEMMSMKPAKGVLTEQVAGPLGQNLEVEPYSQYSNVQFPQVQPQISSSSYYSNLGFYPQQPEEWYSPGIYELRRMPAETLYQGETEVAEMPVTKKPRMGASAGRIKGDELCVVCGDRASGYHYNALTCEGCKGFFRRSITKNAVYKCKNGGNCVMDMYMRRKCQECRLRKCKEMGMLAECMYTGLLTEIQCKSKRLRKNVKQHADQTVNEDSEGRDLRQVTSTTKSCREKTELTPDQQTLLHFIMDSYNKQRMPQEITNKILKEEFSAEENFLILTEMATNHVQVLVEFTKKLPGFQTLDHEDQIALLKGSAVEAMFLRSAEIFNKKLPSGHSDLLEERIRNSGISDEYITPMFSFYKSIGELKMTQEEYALLTAIVILSPDRQYIKDREAVEKLQEPLLDVLQKLCKIHQPENPQHFACLLGRLTELRTFNHHHAEMLMSWRVNDHKFTPLLCEIWDVQ</sequence>
<accession>Q96RI1</accession>
<accession>A1L4K5</accession>
<accession>B7Z412</accession>
<accession>B7ZM06</accession>
<accession>F8VYG8</accession>
<accession>Q8NFP5</accession>
<accession>Q8NFP6</accession>
<accession>Q92943</accession>
<dbReference type="EMBL" id="U68233">
    <property type="protein sequence ID" value="AAB08107.1"/>
    <property type="molecule type" value="mRNA"/>
</dbReference>
<dbReference type="EMBL" id="AF384555">
    <property type="protein sequence ID" value="AAK60271.1"/>
    <property type="molecule type" value="mRNA"/>
</dbReference>
<dbReference type="EMBL" id="AF478445">
    <property type="protein sequence ID" value="AAM53550.1"/>
    <property type="molecule type" value="mRNA"/>
</dbReference>
<dbReference type="EMBL" id="AF478446">
    <property type="protein sequence ID" value="AAM53551.1"/>
    <property type="molecule type" value="mRNA"/>
</dbReference>
<dbReference type="EMBL" id="AK296612">
    <property type="protein sequence ID" value="BAH12398.1"/>
    <property type="molecule type" value="mRNA"/>
</dbReference>
<dbReference type="EMBL" id="AC010200">
    <property type="status" value="NOT_ANNOTATED_CDS"/>
    <property type="molecule type" value="Genomic_DNA"/>
</dbReference>
<dbReference type="EMBL" id="CH471054">
    <property type="protein sequence ID" value="EAW97639.1"/>
    <property type="molecule type" value="Genomic_DNA"/>
</dbReference>
<dbReference type="EMBL" id="BC144183">
    <property type="status" value="NOT_ANNOTATED_CDS"/>
    <property type="molecule type" value="mRNA"/>
</dbReference>
<dbReference type="EMBL" id="BC144184">
    <property type="protein sequence ID" value="AAI44185.1"/>
    <property type="molecule type" value="mRNA"/>
</dbReference>
<dbReference type="EMBL" id="BC130573">
    <property type="protein sequence ID" value="AAI30574.1"/>
    <property type="molecule type" value="mRNA"/>
</dbReference>
<dbReference type="CCDS" id="CCDS55873.1">
    <molecule id="Q96RI1-1"/>
</dbReference>
<dbReference type="CCDS" id="CCDS55874.1">
    <molecule id="Q96RI1-5"/>
</dbReference>
<dbReference type="CCDS" id="CCDS55875.1">
    <molecule id="Q96RI1-4"/>
</dbReference>
<dbReference type="CCDS" id="CCDS55876.1">
    <molecule id="Q96RI1-3"/>
</dbReference>
<dbReference type="CCDS" id="CCDS9078.1">
    <molecule id="Q96RI1-2"/>
</dbReference>
<dbReference type="RefSeq" id="NP_001193906.1">
    <molecule id="Q96RI1-1"/>
    <property type="nucleotide sequence ID" value="NM_001206977.2"/>
</dbReference>
<dbReference type="RefSeq" id="NP_001193907.1">
    <molecule id="Q96RI1-5"/>
    <property type="nucleotide sequence ID" value="NM_001206978.2"/>
</dbReference>
<dbReference type="RefSeq" id="NP_001193908.1">
    <molecule id="Q96RI1-1"/>
    <property type="nucleotide sequence ID" value="NM_001206979.2"/>
</dbReference>
<dbReference type="RefSeq" id="NP_001193921.1">
    <molecule id="Q96RI1-4"/>
    <property type="nucleotide sequence ID" value="NM_001206992.2"/>
</dbReference>
<dbReference type="RefSeq" id="NP_001193922.1">
    <molecule id="Q96RI1-3"/>
    <property type="nucleotide sequence ID" value="NM_001206993.2"/>
</dbReference>
<dbReference type="RefSeq" id="NP_005114.1">
    <molecule id="Q96RI1-2"/>
    <property type="nucleotide sequence ID" value="NM_005123.4"/>
</dbReference>
<dbReference type="RefSeq" id="XP_011537342.1">
    <molecule id="Q96RI1-1"/>
    <property type="nucleotide sequence ID" value="XM_011539040.3"/>
</dbReference>
<dbReference type="RefSeq" id="XP_047285899.1">
    <molecule id="Q96RI1-2"/>
    <property type="nucleotide sequence ID" value="XM_047429943.1"/>
</dbReference>
<dbReference type="RefSeq" id="XP_054229928.1">
    <molecule id="Q96RI1-1"/>
    <property type="nucleotide sequence ID" value="XM_054373953.1"/>
</dbReference>
<dbReference type="RefSeq" id="XP_054229929.1">
    <molecule id="Q96RI1-2"/>
    <property type="nucleotide sequence ID" value="XM_054373954.1"/>
</dbReference>
<dbReference type="PDB" id="1OSH">
    <property type="method" value="X-ray"/>
    <property type="resolution" value="1.80 A"/>
    <property type="chains" value="A=258-486"/>
</dbReference>
<dbReference type="PDB" id="3BEJ">
    <property type="method" value="X-ray"/>
    <property type="resolution" value="1.90 A"/>
    <property type="chains" value="A/B=249-486"/>
</dbReference>
<dbReference type="PDB" id="3DCT">
    <property type="method" value="X-ray"/>
    <property type="resolution" value="2.50 A"/>
    <property type="chains" value="A=252-486"/>
</dbReference>
<dbReference type="PDB" id="3DCU">
    <property type="method" value="X-ray"/>
    <property type="resolution" value="2.95 A"/>
    <property type="chains" value="A=252-486"/>
</dbReference>
<dbReference type="PDB" id="3FLI">
    <property type="method" value="X-ray"/>
    <property type="resolution" value="2.00 A"/>
    <property type="chains" value="A=258-486"/>
</dbReference>
<dbReference type="PDB" id="3FXV">
    <property type="method" value="X-ray"/>
    <property type="resolution" value="2.26 A"/>
    <property type="chains" value="A=258-486"/>
</dbReference>
<dbReference type="PDB" id="3GD2">
    <property type="method" value="X-ray"/>
    <property type="resolution" value="3.20 A"/>
    <property type="chains" value="A=260-486"/>
</dbReference>
<dbReference type="PDB" id="3HC5">
    <property type="method" value="X-ray"/>
    <property type="resolution" value="2.60 A"/>
    <property type="chains" value="A=257-486"/>
</dbReference>
<dbReference type="PDB" id="3HC6">
    <property type="method" value="X-ray"/>
    <property type="resolution" value="3.20 A"/>
    <property type="chains" value="A=257-486"/>
</dbReference>
<dbReference type="PDB" id="3L1B">
    <property type="method" value="X-ray"/>
    <property type="resolution" value="1.90 A"/>
    <property type="chains" value="A=258-486"/>
</dbReference>
<dbReference type="PDB" id="3OKH">
    <property type="method" value="X-ray"/>
    <property type="resolution" value="2.50 A"/>
    <property type="chains" value="A=258-486"/>
</dbReference>
<dbReference type="PDB" id="3OKI">
    <property type="method" value="X-ray"/>
    <property type="resolution" value="2.00 A"/>
    <property type="chains" value="A/C=258-486"/>
</dbReference>
<dbReference type="PDB" id="3OLF">
    <property type="method" value="X-ray"/>
    <property type="resolution" value="1.90 A"/>
    <property type="chains" value="A/C=258-486"/>
</dbReference>
<dbReference type="PDB" id="3OMK">
    <property type="method" value="X-ray"/>
    <property type="resolution" value="1.90 A"/>
    <property type="chains" value="A/C=258-486"/>
</dbReference>
<dbReference type="PDB" id="3OMM">
    <property type="method" value="X-ray"/>
    <property type="resolution" value="2.10 A"/>
    <property type="chains" value="A/C=258-486"/>
</dbReference>
<dbReference type="PDB" id="3OOF">
    <property type="method" value="X-ray"/>
    <property type="resolution" value="2.29 A"/>
    <property type="chains" value="A/C=258-486"/>
</dbReference>
<dbReference type="PDB" id="3OOK">
    <property type="method" value="X-ray"/>
    <property type="resolution" value="2.29 A"/>
    <property type="chains" value="A/C=258-486"/>
</dbReference>
<dbReference type="PDB" id="3P88">
    <property type="method" value="X-ray"/>
    <property type="resolution" value="2.95 A"/>
    <property type="chains" value="A=258-486"/>
</dbReference>
<dbReference type="PDB" id="3P89">
    <property type="method" value="X-ray"/>
    <property type="resolution" value="2.30 A"/>
    <property type="chains" value="A=258-486"/>
</dbReference>
<dbReference type="PDB" id="3RUT">
    <property type="method" value="X-ray"/>
    <property type="resolution" value="3.00 A"/>
    <property type="chains" value="A=258-486"/>
</dbReference>
<dbReference type="PDB" id="3RUU">
    <property type="method" value="X-ray"/>
    <property type="resolution" value="2.50 A"/>
    <property type="chains" value="A=258-486"/>
</dbReference>
<dbReference type="PDB" id="3RVF">
    <property type="method" value="X-ray"/>
    <property type="resolution" value="3.10 A"/>
    <property type="chains" value="A=257-486"/>
</dbReference>
<dbReference type="PDB" id="4OIV">
    <property type="method" value="X-ray"/>
    <property type="resolution" value="1.70 A"/>
    <property type="chains" value="A/B=258-483"/>
</dbReference>
<dbReference type="PDB" id="4QE8">
    <property type="method" value="X-ray"/>
    <property type="resolution" value="2.62 A"/>
    <property type="chains" value="A/B=258-486"/>
</dbReference>
<dbReference type="PDB" id="4WVD">
    <property type="method" value="X-ray"/>
    <property type="resolution" value="2.90 A"/>
    <property type="chains" value="A/B=258-468"/>
</dbReference>
<dbReference type="PDB" id="5IAW">
    <property type="method" value="X-ray"/>
    <property type="resolution" value="2.58 A"/>
    <property type="chains" value="A/B=259-486"/>
</dbReference>
<dbReference type="PDB" id="5ICK">
    <property type="method" value="X-ray"/>
    <property type="resolution" value="2.47 A"/>
    <property type="chains" value="A/B=258-486"/>
</dbReference>
<dbReference type="PDB" id="5Q0I">
    <property type="method" value="X-ray"/>
    <property type="resolution" value="1.70 A"/>
    <property type="chains" value="A=258-486"/>
</dbReference>
<dbReference type="PDB" id="5Q0J">
    <property type="method" value="X-ray"/>
    <property type="resolution" value="2.00 A"/>
    <property type="chains" value="A/C=258-486"/>
</dbReference>
<dbReference type="PDB" id="5Q0K">
    <property type="method" value="X-ray"/>
    <property type="resolution" value="1.80 A"/>
    <property type="chains" value="A=258-486"/>
</dbReference>
<dbReference type="PDB" id="5Q0L">
    <property type="method" value="X-ray"/>
    <property type="resolution" value="2.50 A"/>
    <property type="chains" value="A/C=258-486"/>
</dbReference>
<dbReference type="PDB" id="5Q0M">
    <property type="method" value="X-ray"/>
    <property type="resolution" value="2.20 A"/>
    <property type="chains" value="A=258-486"/>
</dbReference>
<dbReference type="PDB" id="5Q0N">
    <property type="method" value="X-ray"/>
    <property type="resolution" value="2.40 A"/>
    <property type="chains" value="A/C=258-486"/>
</dbReference>
<dbReference type="PDB" id="5Q0O">
    <property type="method" value="X-ray"/>
    <property type="resolution" value="1.90 A"/>
    <property type="chains" value="A/C=258-486"/>
</dbReference>
<dbReference type="PDB" id="5Q0P">
    <property type="method" value="X-ray"/>
    <property type="resolution" value="1.80 A"/>
    <property type="chains" value="A/C=258-486"/>
</dbReference>
<dbReference type="PDB" id="5Q0Q">
    <property type="method" value="X-ray"/>
    <property type="resolution" value="2.60 A"/>
    <property type="chains" value="A/C=258-486"/>
</dbReference>
<dbReference type="PDB" id="5Q0R">
    <property type="method" value="X-ray"/>
    <property type="resolution" value="1.91 A"/>
    <property type="chains" value="A=258-486"/>
</dbReference>
<dbReference type="PDB" id="5Q0S">
    <property type="method" value="X-ray"/>
    <property type="resolution" value="2.50 A"/>
    <property type="chains" value="A/C=258-486"/>
</dbReference>
<dbReference type="PDB" id="5Q0T">
    <property type="method" value="X-ray"/>
    <property type="resolution" value="2.14 A"/>
    <property type="chains" value="A=258-486"/>
</dbReference>
<dbReference type="PDB" id="5Q0U">
    <property type="method" value="X-ray"/>
    <property type="resolution" value="1.90 A"/>
    <property type="chains" value="A/C=258-486"/>
</dbReference>
<dbReference type="PDB" id="5Q0V">
    <property type="method" value="X-ray"/>
    <property type="resolution" value="1.87 A"/>
    <property type="chains" value="A/C=258-486"/>
</dbReference>
<dbReference type="PDB" id="5Q0W">
    <property type="method" value="X-ray"/>
    <property type="resolution" value="1.90 A"/>
    <property type="chains" value="A=258-486"/>
</dbReference>
<dbReference type="PDB" id="5Q0X">
    <property type="method" value="X-ray"/>
    <property type="resolution" value="2.26 A"/>
    <property type="chains" value="A=258-486"/>
</dbReference>
<dbReference type="PDB" id="5Q0Y">
    <property type="method" value="X-ray"/>
    <property type="resolution" value="2.20 A"/>
    <property type="chains" value="A/C=258-486"/>
</dbReference>
<dbReference type="PDB" id="5Q0Z">
    <property type="method" value="X-ray"/>
    <property type="resolution" value="2.26 A"/>
    <property type="chains" value="A/C=258-486"/>
</dbReference>
<dbReference type="PDB" id="5Q10">
    <property type="method" value="X-ray"/>
    <property type="resolution" value="2.20 A"/>
    <property type="chains" value="A=258-486"/>
</dbReference>
<dbReference type="PDB" id="5Q11">
    <property type="method" value="X-ray"/>
    <property type="resolution" value="2.20 A"/>
    <property type="chains" value="A=258-486"/>
</dbReference>
<dbReference type="PDB" id="5Q12">
    <property type="method" value="X-ray"/>
    <property type="resolution" value="2.00 A"/>
    <property type="chains" value="A=258-486"/>
</dbReference>
<dbReference type="PDB" id="5Q13">
    <property type="method" value="X-ray"/>
    <property type="resolution" value="1.90 A"/>
    <property type="chains" value="A/C=258-486"/>
</dbReference>
<dbReference type="PDB" id="5Q14">
    <property type="method" value="X-ray"/>
    <property type="resolution" value="1.85 A"/>
    <property type="chains" value="A/C=258-486"/>
</dbReference>
<dbReference type="PDB" id="5Q15">
    <property type="method" value="X-ray"/>
    <property type="resolution" value="1.90 A"/>
    <property type="chains" value="A/C=258-486"/>
</dbReference>
<dbReference type="PDB" id="5Q16">
    <property type="method" value="X-ray"/>
    <property type="resolution" value="2.00 A"/>
    <property type="chains" value="A/C=258-486"/>
</dbReference>
<dbReference type="PDB" id="5Q17">
    <property type="method" value="X-ray"/>
    <property type="resolution" value="2.10 A"/>
    <property type="chains" value="A=258-486"/>
</dbReference>
<dbReference type="PDB" id="5Q18">
    <property type="method" value="X-ray"/>
    <property type="resolution" value="1.90 A"/>
    <property type="chains" value="A/C=258-486"/>
</dbReference>
<dbReference type="PDB" id="5Q19">
    <property type="method" value="X-ray"/>
    <property type="resolution" value="1.98 A"/>
    <property type="chains" value="A/C=258-486"/>
</dbReference>
<dbReference type="PDB" id="5Q1A">
    <property type="method" value="X-ray"/>
    <property type="resolution" value="2.00 A"/>
    <property type="chains" value="A/C=258-486"/>
</dbReference>
<dbReference type="PDB" id="5Q1B">
    <property type="method" value="X-ray"/>
    <property type="resolution" value="2.30 A"/>
    <property type="chains" value="A/C=258-486"/>
</dbReference>
<dbReference type="PDB" id="5Q1C">
    <property type="method" value="X-ray"/>
    <property type="resolution" value="2.30 A"/>
    <property type="chains" value="A/C=258-486"/>
</dbReference>
<dbReference type="PDB" id="5Q1D">
    <property type="method" value="X-ray"/>
    <property type="resolution" value="1.89 A"/>
    <property type="chains" value="A/C=258-486"/>
</dbReference>
<dbReference type="PDB" id="5Q1E">
    <property type="method" value="X-ray"/>
    <property type="resolution" value="1.85 A"/>
    <property type="chains" value="A=258-486"/>
</dbReference>
<dbReference type="PDB" id="5Q1F">
    <property type="method" value="X-ray"/>
    <property type="resolution" value="2.30 A"/>
    <property type="chains" value="A/C=258-486"/>
</dbReference>
<dbReference type="PDB" id="5Q1G">
    <property type="method" value="X-ray"/>
    <property type="resolution" value="2.00 A"/>
    <property type="chains" value="A=258-486"/>
</dbReference>
<dbReference type="PDB" id="5Q1H">
    <property type="method" value="X-ray"/>
    <property type="resolution" value="2.20 A"/>
    <property type="chains" value="A/C/E/G=258-486"/>
</dbReference>
<dbReference type="PDB" id="5Q1I">
    <property type="method" value="X-ray"/>
    <property type="resolution" value="1.95 A"/>
    <property type="chains" value="A=258-486"/>
</dbReference>
<dbReference type="PDB" id="5WZX">
    <property type="method" value="X-ray"/>
    <property type="resolution" value="2.95 A"/>
    <property type="chains" value="A/B=258-485"/>
</dbReference>
<dbReference type="PDB" id="5Y1J">
    <property type="method" value="X-ray"/>
    <property type="resolution" value="2.00 A"/>
    <property type="chains" value="A=258-485"/>
</dbReference>
<dbReference type="PDB" id="5Y44">
    <property type="method" value="X-ray"/>
    <property type="resolution" value="2.35 A"/>
    <property type="chains" value="A=258-485"/>
</dbReference>
<dbReference type="PDB" id="5Y49">
    <property type="method" value="X-ray"/>
    <property type="resolution" value="2.40 A"/>
    <property type="chains" value="A/B=259-485"/>
</dbReference>
<dbReference type="PDB" id="5YXB">
    <property type="method" value="X-ray"/>
    <property type="resolution" value="2.95 A"/>
    <property type="chains" value="A=258-486"/>
</dbReference>
<dbReference type="PDB" id="5YXD">
    <property type="method" value="X-ray"/>
    <property type="resolution" value="2.98 A"/>
    <property type="chains" value="A=258-486"/>
</dbReference>
<dbReference type="PDB" id="5YXJ">
    <property type="method" value="X-ray"/>
    <property type="resolution" value="2.62 A"/>
    <property type="chains" value="A/B=258-486"/>
</dbReference>
<dbReference type="PDB" id="5YXL">
    <property type="method" value="X-ray"/>
    <property type="resolution" value="2.24 A"/>
    <property type="chains" value="A/C=258-486"/>
</dbReference>
<dbReference type="PDB" id="5Z12">
    <property type="method" value="X-ray"/>
    <property type="resolution" value="2.75 A"/>
    <property type="chains" value="A/D=259-486"/>
</dbReference>
<dbReference type="PDB" id="6A5W">
    <property type="method" value="X-ray"/>
    <property type="resolution" value="2.88 A"/>
    <property type="chains" value="A/C=258-485"/>
</dbReference>
<dbReference type="PDB" id="6A5X">
    <property type="method" value="X-ray"/>
    <property type="resolution" value="2.60 A"/>
    <property type="chains" value="A=258-486"/>
</dbReference>
<dbReference type="PDB" id="6A5Y">
    <property type="method" value="X-ray"/>
    <property type="resolution" value="2.10 A"/>
    <property type="chains" value="A=258-485"/>
</dbReference>
<dbReference type="PDB" id="6A5Z">
    <property type="method" value="X-ray"/>
    <property type="resolution" value="2.95 A"/>
    <property type="chains" value="A/H=258-486"/>
</dbReference>
<dbReference type="PDB" id="6A60">
    <property type="method" value="X-ray"/>
    <property type="resolution" value="3.05 A"/>
    <property type="chains" value="A=258-486"/>
</dbReference>
<dbReference type="PDB" id="6HL0">
    <property type="method" value="X-ray"/>
    <property type="resolution" value="1.66 A"/>
    <property type="chains" value="A=258-486"/>
</dbReference>
<dbReference type="PDB" id="6HL1">
    <property type="method" value="X-ray"/>
    <property type="resolution" value="1.60 A"/>
    <property type="chains" value="A=258-486"/>
</dbReference>
<dbReference type="PDB" id="6ITM">
    <property type="method" value="X-ray"/>
    <property type="resolution" value="2.50 A"/>
    <property type="chains" value="A/C=257-486"/>
</dbReference>
<dbReference type="PDB" id="7D42">
    <property type="method" value="X-ray"/>
    <property type="resolution" value="2.70 A"/>
    <property type="chains" value="A=258-484"/>
</dbReference>
<dbReference type="PDB" id="7TRB">
    <property type="method" value="X-ray"/>
    <property type="resolution" value="2.15 A"/>
    <property type="chains" value="A/B=258-486"/>
</dbReference>
<dbReference type="PDB" id="7VUE">
    <property type="method" value="X-ray"/>
    <property type="resolution" value="2.60 A"/>
    <property type="chains" value="A=259-484"/>
</dbReference>
<dbReference type="PDB" id="8HBM">
    <property type="method" value="X-ray"/>
    <property type="resolution" value="3.30 A"/>
    <property type="chains" value="B/F=127-227"/>
</dbReference>
<dbReference type="PDB" id="8HD3">
    <property type="method" value="X-ray"/>
    <property type="resolution" value="2.29 A"/>
    <property type="chains" value="A/B=257-485"/>
</dbReference>
<dbReference type="PDBsum" id="1OSH"/>
<dbReference type="PDBsum" id="3BEJ"/>
<dbReference type="PDBsum" id="3DCT"/>
<dbReference type="PDBsum" id="3DCU"/>
<dbReference type="PDBsum" id="3FLI"/>
<dbReference type="PDBsum" id="3FXV"/>
<dbReference type="PDBsum" id="3GD2"/>
<dbReference type="PDBsum" id="3HC5"/>
<dbReference type="PDBsum" id="3HC6"/>
<dbReference type="PDBsum" id="3L1B"/>
<dbReference type="PDBsum" id="3OKH"/>
<dbReference type="PDBsum" id="3OKI"/>
<dbReference type="PDBsum" id="3OLF"/>
<dbReference type="PDBsum" id="3OMK"/>
<dbReference type="PDBsum" id="3OMM"/>
<dbReference type="PDBsum" id="3OOF"/>
<dbReference type="PDBsum" id="3OOK"/>
<dbReference type="PDBsum" id="3P88"/>
<dbReference type="PDBsum" id="3P89"/>
<dbReference type="PDBsum" id="3RUT"/>
<dbReference type="PDBsum" id="3RUU"/>
<dbReference type="PDBsum" id="3RVF"/>
<dbReference type="PDBsum" id="4OIV"/>
<dbReference type="PDBsum" id="4QE8"/>
<dbReference type="PDBsum" id="4WVD"/>
<dbReference type="PDBsum" id="5IAW"/>
<dbReference type="PDBsum" id="5ICK"/>
<dbReference type="PDBsum" id="5Q0I"/>
<dbReference type="PDBsum" id="5Q0J"/>
<dbReference type="PDBsum" id="5Q0K"/>
<dbReference type="PDBsum" id="5Q0L"/>
<dbReference type="PDBsum" id="5Q0M"/>
<dbReference type="PDBsum" id="5Q0N"/>
<dbReference type="PDBsum" id="5Q0O"/>
<dbReference type="PDBsum" id="5Q0P"/>
<dbReference type="PDBsum" id="5Q0Q"/>
<dbReference type="PDBsum" id="5Q0R"/>
<dbReference type="PDBsum" id="5Q0S"/>
<dbReference type="PDBsum" id="5Q0T"/>
<dbReference type="PDBsum" id="5Q0U"/>
<dbReference type="PDBsum" id="5Q0V"/>
<dbReference type="PDBsum" id="5Q0W"/>
<dbReference type="PDBsum" id="5Q0X"/>
<dbReference type="PDBsum" id="5Q0Y"/>
<dbReference type="PDBsum" id="5Q0Z"/>
<dbReference type="PDBsum" id="5Q10"/>
<dbReference type="PDBsum" id="5Q11"/>
<dbReference type="PDBsum" id="5Q12"/>
<dbReference type="PDBsum" id="5Q13"/>
<dbReference type="PDBsum" id="5Q14"/>
<dbReference type="PDBsum" id="5Q15"/>
<dbReference type="PDBsum" id="5Q16"/>
<dbReference type="PDBsum" id="5Q17"/>
<dbReference type="PDBsum" id="5Q18"/>
<dbReference type="PDBsum" id="5Q19"/>
<dbReference type="PDBsum" id="5Q1A"/>
<dbReference type="PDBsum" id="5Q1B"/>
<dbReference type="PDBsum" id="5Q1C"/>
<dbReference type="PDBsum" id="5Q1D"/>
<dbReference type="PDBsum" id="5Q1E"/>
<dbReference type="PDBsum" id="5Q1F"/>
<dbReference type="PDBsum" id="5Q1G"/>
<dbReference type="PDBsum" id="5Q1H"/>
<dbReference type="PDBsum" id="5Q1I"/>
<dbReference type="PDBsum" id="5WZX"/>
<dbReference type="PDBsum" id="5Y1J"/>
<dbReference type="PDBsum" id="5Y44"/>
<dbReference type="PDBsum" id="5Y49"/>
<dbReference type="PDBsum" id="5YXB"/>
<dbReference type="PDBsum" id="5YXD"/>
<dbReference type="PDBsum" id="5YXJ"/>
<dbReference type="PDBsum" id="5YXL"/>
<dbReference type="PDBsum" id="5Z12"/>
<dbReference type="PDBsum" id="6A5W"/>
<dbReference type="PDBsum" id="6A5X"/>
<dbReference type="PDBsum" id="6A5Y"/>
<dbReference type="PDBsum" id="6A5Z"/>
<dbReference type="PDBsum" id="6A60"/>
<dbReference type="PDBsum" id="6HL0"/>
<dbReference type="PDBsum" id="6HL1"/>
<dbReference type="PDBsum" id="6ITM"/>
<dbReference type="PDBsum" id="7D42"/>
<dbReference type="PDBsum" id="7TRB"/>
<dbReference type="PDBsum" id="7VUE"/>
<dbReference type="PDBsum" id="8HBM"/>
<dbReference type="PDBsum" id="8HD3"/>
<dbReference type="SMR" id="Q96RI1"/>
<dbReference type="BioGRID" id="115296">
    <property type="interactions" value="30"/>
</dbReference>
<dbReference type="CORUM" id="Q96RI1"/>
<dbReference type="DIP" id="DIP-39370N"/>
<dbReference type="FunCoup" id="Q96RI1">
    <property type="interactions" value="322"/>
</dbReference>
<dbReference type="IntAct" id="Q96RI1">
    <property type="interactions" value="16"/>
</dbReference>
<dbReference type="MINT" id="Q96RI1"/>
<dbReference type="STRING" id="9606.ENSP00000447149"/>
<dbReference type="BindingDB" id="Q96RI1"/>
<dbReference type="ChEMBL" id="CHEMBL2047"/>
<dbReference type="DrugBank" id="DB08220">
    <property type="generic name" value="(8alpha,10alpha,13alpha,17beta)-17-[(4-hydroxyphenyl)carbonyl]androsta-3,5-diene-3-carboxylic acid"/>
</dbReference>
<dbReference type="DrugBank" id="DB00132">
    <property type="generic name" value="alpha-Linolenic acid"/>
</dbReference>
<dbReference type="DrugBank" id="DB12276">
    <property type="generic name" value="Apomine"/>
</dbReference>
<dbReference type="DrugBank" id="DB04557">
    <property type="generic name" value="Arachidonic Acid"/>
</dbReference>
<dbReference type="DrugBank" id="DB06777">
    <property type="generic name" value="Chenodeoxycholic acid"/>
</dbReference>
<dbReference type="DrugBank" id="DB02659">
    <property type="generic name" value="Cholic Acid"/>
</dbReference>
<dbReference type="DrugBank" id="DB15168">
    <property type="generic name" value="Cilofexor"/>
</dbReference>
<dbReference type="DrugBank" id="DB03619">
    <property type="generic name" value="Deoxycholic acid"/>
</dbReference>
<dbReference type="DrugBank" id="DB02509">
    <property type="generic name" value="Farnesol"/>
</dbReference>
<dbReference type="DrugBank" id="DB02545">
    <property type="generic name" value="Fexaramine"/>
</dbReference>
<dbReference type="DrugBank" id="DB11605">
    <property type="generic name" value="Myrrh"/>
</dbReference>
<dbReference type="DrugBank" id="DB16255">
    <property type="generic name" value="Nidufexor"/>
</dbReference>
<dbReference type="DrugBank" id="DB05990">
    <property type="generic name" value="Obeticholic acid"/>
</dbReference>
<dbReference type="DrugBank" id="DB15416">
    <property type="generic name" value="PX-102"/>
</dbReference>
<dbReference type="DrugBank" id="DB04348">
    <property type="generic name" value="Taurocholic acid"/>
</dbReference>
<dbReference type="DrugBank" id="DB16045">
    <property type="generic name" value="TERN-101"/>
</dbReference>
<dbReference type="DrugBank" id="DB16343">
    <property type="generic name" value="Tropifexor"/>
</dbReference>
<dbReference type="DrugBank" id="DB12719">
    <property type="generic name" value="Turofexorate isopropyl"/>
</dbReference>
<dbReference type="DrugBank" id="DB01586">
    <property type="generic name" value="Ursodeoxycholic acid"/>
</dbReference>
<dbReference type="DrugBank" id="DB18782">
    <property type="generic name" value="Vonafexor"/>
</dbReference>
<dbReference type="DrugCentral" id="Q96RI1"/>
<dbReference type="GuidetoPHARMACOLOGY" id="603"/>
<dbReference type="SwissLipids" id="SLP:000001581"/>
<dbReference type="iPTMnet" id="Q96RI1"/>
<dbReference type="PhosphoSitePlus" id="Q96RI1"/>
<dbReference type="BioMuta" id="NR1H4"/>
<dbReference type="DMDM" id="46577705"/>
<dbReference type="jPOST" id="Q96RI1"/>
<dbReference type="MassIVE" id="Q96RI1"/>
<dbReference type="PaxDb" id="9606-ENSP00000447149"/>
<dbReference type="PeptideAtlas" id="Q96RI1"/>
<dbReference type="ProteomicsDB" id="29204"/>
<dbReference type="ProteomicsDB" id="77963">
    <molecule id="Q96RI1-3"/>
</dbReference>
<dbReference type="ProteomicsDB" id="77964">
    <molecule id="Q96RI1-1"/>
</dbReference>
<dbReference type="ProteomicsDB" id="77965">
    <molecule id="Q96RI1-2"/>
</dbReference>
<dbReference type="ProteomicsDB" id="77966">
    <molecule id="Q96RI1-4"/>
</dbReference>
<dbReference type="Antibodypedia" id="17868">
    <property type="antibodies" value="446 antibodies from 36 providers"/>
</dbReference>
<dbReference type="DNASU" id="9971"/>
<dbReference type="Ensembl" id="ENST00000188403.7">
    <molecule id="Q96RI1-4"/>
    <property type="protein sequence ID" value="ENSP00000188403.7"/>
    <property type="gene ID" value="ENSG00000012504.15"/>
</dbReference>
<dbReference type="Ensembl" id="ENST00000392986.8">
    <molecule id="Q96RI1-1"/>
    <property type="protein sequence ID" value="ENSP00000376712.3"/>
    <property type="gene ID" value="ENSG00000012504.15"/>
</dbReference>
<dbReference type="Ensembl" id="ENST00000548884.5">
    <molecule id="Q96RI1-2"/>
    <property type="protein sequence ID" value="ENSP00000448506.1"/>
    <property type="gene ID" value="ENSG00000012504.15"/>
</dbReference>
<dbReference type="Ensembl" id="ENST00000549996.5">
    <molecule id="Q96RI1-5"/>
    <property type="protein sequence ID" value="ENSP00000448978.1"/>
    <property type="gene ID" value="ENSG00000012504.15"/>
</dbReference>
<dbReference type="Ensembl" id="ENST00000551379.5">
    <molecule id="Q96RI1-3"/>
    <property type="protein sequence ID" value="ENSP00000447149.1"/>
    <property type="gene ID" value="ENSG00000012504.15"/>
</dbReference>
<dbReference type="Ensembl" id="ENST00000648861.1">
    <molecule id="Q96RI1-1"/>
    <property type="protein sequence ID" value="ENSP00000496908.1"/>
    <property type="gene ID" value="ENSG00000012504.15"/>
</dbReference>
<dbReference type="GeneID" id="9971"/>
<dbReference type="KEGG" id="hsa:9971"/>
<dbReference type="MANE-Select" id="ENST00000392986.8">
    <molecule id="Q96RI1-1"/>
    <property type="protein sequence ID" value="ENSP00000376712.3"/>
    <property type="RefSeq nucleotide sequence ID" value="NM_001206979.2"/>
    <property type="RefSeq protein sequence ID" value="NP_001193908.1"/>
</dbReference>
<dbReference type="UCSC" id="uc001thp.3">
    <molecule id="Q96RI1-3"/>
    <property type="organism name" value="human"/>
</dbReference>
<dbReference type="AGR" id="HGNC:7967"/>
<dbReference type="CTD" id="9971"/>
<dbReference type="DisGeNET" id="9971"/>
<dbReference type="GeneCards" id="NR1H4"/>
<dbReference type="HGNC" id="HGNC:7967">
    <property type="gene designation" value="NR1H4"/>
</dbReference>
<dbReference type="HPA" id="ENSG00000012504">
    <property type="expression patterns" value="Tissue enhanced (intestine, liver)"/>
</dbReference>
<dbReference type="MalaCards" id="NR1H4"/>
<dbReference type="MIM" id="603826">
    <property type="type" value="gene"/>
</dbReference>
<dbReference type="MIM" id="617049">
    <property type="type" value="phenotype"/>
</dbReference>
<dbReference type="neXtProt" id="NX_Q96RI1"/>
<dbReference type="OpenTargets" id="ENSG00000012504"/>
<dbReference type="Orphanet" id="69665">
    <property type="disease" value="Intrahepatic cholestasis of pregnancy"/>
</dbReference>
<dbReference type="Orphanet" id="480476">
    <property type="disease" value="Progressive familial intrahepatic cholestasis type 5"/>
</dbReference>
<dbReference type="PharmGKB" id="PA31752"/>
<dbReference type="VEuPathDB" id="HostDB:ENSG00000012504"/>
<dbReference type="eggNOG" id="KOG3575">
    <property type="taxonomic scope" value="Eukaryota"/>
</dbReference>
<dbReference type="GeneTree" id="ENSGT00940000158037"/>
<dbReference type="HOGENOM" id="CLU_007368_12_3_1"/>
<dbReference type="InParanoid" id="Q96RI1"/>
<dbReference type="OMA" id="XISDEYI"/>
<dbReference type="OrthoDB" id="5837785at2759"/>
<dbReference type="PAN-GO" id="Q96RI1">
    <property type="GO annotations" value="9 GO annotations based on evolutionary models"/>
</dbReference>
<dbReference type="PhylomeDB" id="Q96RI1"/>
<dbReference type="TreeFam" id="TF316304"/>
<dbReference type="PathwayCommons" id="Q96RI1"/>
<dbReference type="Reactome" id="R-HSA-159418">
    <property type="pathway name" value="Recycling of bile acids and salts"/>
</dbReference>
<dbReference type="Reactome" id="R-HSA-192105">
    <property type="pathway name" value="Synthesis of bile acids and bile salts"/>
</dbReference>
<dbReference type="Reactome" id="R-HSA-193368">
    <property type="pathway name" value="Synthesis of bile acids and bile salts via 7alpha-hydroxycholesterol"/>
</dbReference>
<dbReference type="Reactome" id="R-HSA-193807">
    <property type="pathway name" value="Synthesis of bile acids and bile salts via 27-hydroxycholesterol"/>
</dbReference>
<dbReference type="Reactome" id="R-HSA-1989781">
    <property type="pathway name" value="PPARA activates gene expression"/>
</dbReference>
<dbReference type="Reactome" id="R-HSA-211976">
    <property type="pathway name" value="Endogenous sterols"/>
</dbReference>
<dbReference type="Reactome" id="R-HSA-383280">
    <property type="pathway name" value="Nuclear Receptor transcription pathway"/>
</dbReference>
<dbReference type="Reactome" id="R-HSA-4090294">
    <molecule id="Q96RI1-2"/>
    <property type="pathway name" value="SUMOylation of intracellular receptors"/>
</dbReference>
<dbReference type="SignaLink" id="Q96RI1"/>
<dbReference type="SIGNOR" id="Q96RI1"/>
<dbReference type="BioGRID-ORCS" id="9971">
    <property type="hits" value="10 hits in 1171 CRISPR screens"/>
</dbReference>
<dbReference type="ChiTaRS" id="NR1H4">
    <property type="organism name" value="human"/>
</dbReference>
<dbReference type="EvolutionaryTrace" id="Q96RI1"/>
<dbReference type="GeneWiki" id="Farnesoid_X_receptor"/>
<dbReference type="GenomeRNAi" id="9971"/>
<dbReference type="Pharos" id="Q96RI1">
    <property type="development level" value="Tclin"/>
</dbReference>
<dbReference type="PRO" id="PR:Q96RI1"/>
<dbReference type="Proteomes" id="UP000005640">
    <property type="component" value="Chromosome 12"/>
</dbReference>
<dbReference type="RNAct" id="Q96RI1">
    <property type="molecule type" value="protein"/>
</dbReference>
<dbReference type="Bgee" id="ENSG00000012504">
    <property type="expression patterns" value="Expressed in right lobe of liver and 110 other cell types or tissues"/>
</dbReference>
<dbReference type="ExpressionAtlas" id="Q96RI1">
    <property type="expression patterns" value="baseline and differential"/>
</dbReference>
<dbReference type="GO" id="GO:0000785">
    <property type="term" value="C:chromatin"/>
    <property type="evidence" value="ECO:0000247"/>
    <property type="project" value="NTNU_SB"/>
</dbReference>
<dbReference type="GO" id="GO:0005829">
    <property type="term" value="C:cytosol"/>
    <property type="evidence" value="ECO:0000314"/>
    <property type="project" value="HPA"/>
</dbReference>
<dbReference type="GO" id="GO:0000791">
    <property type="term" value="C:euchromatin"/>
    <property type="evidence" value="ECO:0000314"/>
    <property type="project" value="BHF-UCL"/>
</dbReference>
<dbReference type="GO" id="GO:0016607">
    <property type="term" value="C:nuclear speck"/>
    <property type="evidence" value="ECO:0000314"/>
    <property type="project" value="HPA"/>
</dbReference>
<dbReference type="GO" id="GO:0005654">
    <property type="term" value="C:nucleoplasm"/>
    <property type="evidence" value="ECO:0000314"/>
    <property type="project" value="HPA"/>
</dbReference>
<dbReference type="GO" id="GO:0005634">
    <property type="term" value="C:nucleus"/>
    <property type="evidence" value="ECO:0000318"/>
    <property type="project" value="GO_Central"/>
</dbReference>
<dbReference type="GO" id="GO:0043235">
    <property type="term" value="C:receptor complex"/>
    <property type="evidence" value="ECO:0000314"/>
    <property type="project" value="UniProtKB"/>
</dbReference>
<dbReference type="GO" id="GO:0090575">
    <property type="term" value="C:RNA polymerase II transcription regulator complex"/>
    <property type="evidence" value="ECO:0000318"/>
    <property type="project" value="GO_Central"/>
</dbReference>
<dbReference type="GO" id="GO:0032052">
    <property type="term" value="F:bile acid binding"/>
    <property type="evidence" value="ECO:0000314"/>
    <property type="project" value="BHF-UCL"/>
</dbReference>
<dbReference type="GO" id="GO:0038186">
    <property type="term" value="F:bile acid nuclear receptor activity"/>
    <property type="evidence" value="ECO:0000314"/>
    <property type="project" value="UniProtKB"/>
</dbReference>
<dbReference type="GO" id="GO:1902122">
    <property type="term" value="F:chenodeoxycholic acid binding"/>
    <property type="evidence" value="ECO:0000314"/>
    <property type="project" value="UniProtKB"/>
</dbReference>
<dbReference type="GO" id="GO:0001228">
    <property type="term" value="F:DNA-binding transcription activator activity, RNA polymerase II-specific"/>
    <property type="evidence" value="ECO:0000314"/>
    <property type="project" value="BHF-UCL"/>
</dbReference>
<dbReference type="GO" id="GO:0003700">
    <property type="term" value="F:DNA-binding transcription factor activity"/>
    <property type="evidence" value="ECO:0000304"/>
    <property type="project" value="ProtInc"/>
</dbReference>
<dbReference type="GO" id="GO:0000981">
    <property type="term" value="F:DNA-binding transcription factor activity, RNA polymerase II-specific"/>
    <property type="evidence" value="ECO:0000314"/>
    <property type="project" value="BHF-UCL"/>
</dbReference>
<dbReference type="GO" id="GO:0004879">
    <property type="term" value="F:nuclear receptor activity"/>
    <property type="evidence" value="ECO:0000314"/>
    <property type="project" value="MGI"/>
</dbReference>
<dbReference type="GO" id="GO:0016922">
    <property type="term" value="F:nuclear receptor binding"/>
    <property type="evidence" value="ECO:0000304"/>
    <property type="project" value="BHF-UCL"/>
</dbReference>
<dbReference type="GO" id="GO:0046965">
    <property type="term" value="F:nuclear retinoid X receptor binding"/>
    <property type="evidence" value="ECO:0007669"/>
    <property type="project" value="Ensembl"/>
</dbReference>
<dbReference type="GO" id="GO:0000978">
    <property type="term" value="F:RNA polymerase II cis-regulatory region sequence-specific DNA binding"/>
    <property type="evidence" value="ECO:0000314"/>
    <property type="project" value="BHF-UCL"/>
</dbReference>
<dbReference type="GO" id="GO:0000977">
    <property type="term" value="F:RNA polymerase II transcription regulatory region sequence-specific DNA binding"/>
    <property type="evidence" value="ECO:0000314"/>
    <property type="project" value="ParkinsonsUK-UCL"/>
</dbReference>
<dbReference type="GO" id="GO:0043565">
    <property type="term" value="F:sequence-specific DNA binding"/>
    <property type="evidence" value="ECO:0000314"/>
    <property type="project" value="UniProtKB"/>
</dbReference>
<dbReference type="GO" id="GO:0000976">
    <property type="term" value="F:transcription cis-regulatory region binding"/>
    <property type="evidence" value="ECO:0000315"/>
    <property type="project" value="UniProtKB"/>
</dbReference>
<dbReference type="GO" id="GO:0001221">
    <property type="term" value="F:transcription coregulator binding"/>
    <property type="evidence" value="ECO:0000353"/>
    <property type="project" value="UniProtKB"/>
</dbReference>
<dbReference type="GO" id="GO:0008270">
    <property type="term" value="F:zinc ion binding"/>
    <property type="evidence" value="ECO:0007669"/>
    <property type="project" value="UniProtKB-KW"/>
</dbReference>
<dbReference type="GO" id="GO:0015721">
    <property type="term" value="P:bile acid and bile salt transport"/>
    <property type="evidence" value="ECO:0000304"/>
    <property type="project" value="Reactome"/>
</dbReference>
<dbReference type="GO" id="GO:0008206">
    <property type="term" value="P:bile acid metabolic process"/>
    <property type="evidence" value="ECO:0007669"/>
    <property type="project" value="Ensembl"/>
</dbReference>
<dbReference type="GO" id="GO:0030154">
    <property type="term" value="P:cell differentiation"/>
    <property type="evidence" value="ECO:0000318"/>
    <property type="project" value="GO_Central"/>
</dbReference>
<dbReference type="GO" id="GO:0007043">
    <property type="term" value="P:cell-cell junction assembly"/>
    <property type="evidence" value="ECO:0007669"/>
    <property type="project" value="Ensembl"/>
</dbReference>
<dbReference type="GO" id="GO:1903413">
    <property type="term" value="P:cellular response to bile acid"/>
    <property type="evidence" value="ECO:0000314"/>
    <property type="project" value="UniProtKB"/>
</dbReference>
<dbReference type="GO" id="GO:0071398">
    <property type="term" value="P:cellular response to fatty acid"/>
    <property type="evidence" value="ECO:0000314"/>
    <property type="project" value="UniProtKB"/>
</dbReference>
<dbReference type="GO" id="GO:0071222">
    <property type="term" value="P:cellular response to lipopolysaccharide"/>
    <property type="evidence" value="ECO:0007669"/>
    <property type="project" value="Ensembl"/>
</dbReference>
<dbReference type="GO" id="GO:0042632">
    <property type="term" value="P:cholesterol homeostasis"/>
    <property type="evidence" value="ECO:0007669"/>
    <property type="project" value="Ensembl"/>
</dbReference>
<dbReference type="GO" id="GO:0042742">
    <property type="term" value="P:defense response to bacterium"/>
    <property type="evidence" value="ECO:0007669"/>
    <property type="project" value="Ensembl"/>
</dbReference>
<dbReference type="GO" id="GO:0055089">
    <property type="term" value="P:fatty acid homeostasis"/>
    <property type="evidence" value="ECO:0007669"/>
    <property type="project" value="Ensembl"/>
</dbReference>
<dbReference type="GO" id="GO:0006954">
    <property type="term" value="P:inflammatory response"/>
    <property type="evidence" value="ECO:0007669"/>
    <property type="project" value="UniProtKB-KW"/>
</dbReference>
<dbReference type="GO" id="GO:0045087">
    <property type="term" value="P:innate immune response"/>
    <property type="evidence" value="ECO:0007669"/>
    <property type="project" value="UniProtKB-KW"/>
</dbReference>
<dbReference type="GO" id="GO:0001678">
    <property type="term" value="P:intracellular glucose homeostasis"/>
    <property type="evidence" value="ECO:0007669"/>
    <property type="project" value="Ensembl"/>
</dbReference>
<dbReference type="GO" id="GO:0030522">
    <property type="term" value="P:intracellular receptor signaling pathway"/>
    <property type="evidence" value="ECO:0000318"/>
    <property type="project" value="GO_Central"/>
</dbReference>
<dbReference type="GO" id="GO:0035356">
    <property type="term" value="P:intracellular triglyceride homeostasis"/>
    <property type="evidence" value="ECO:0000314"/>
    <property type="project" value="UniProtKB"/>
</dbReference>
<dbReference type="GO" id="GO:0043066">
    <property type="term" value="P:negative regulation of apoptotic process"/>
    <property type="evidence" value="ECO:0000314"/>
    <property type="project" value="UniProtKB"/>
</dbReference>
<dbReference type="GO" id="GO:0043124">
    <property type="term" value="P:negative regulation of canonical NF-kappaB signal transduction"/>
    <property type="evidence" value="ECO:0000314"/>
    <property type="project" value="UniProtKB"/>
</dbReference>
<dbReference type="GO" id="GO:0050728">
    <property type="term" value="P:negative regulation of inflammatory response"/>
    <property type="evidence" value="ECO:0000318"/>
    <property type="project" value="GO_Central"/>
</dbReference>
<dbReference type="GO" id="GO:0032692">
    <property type="term" value="P:negative regulation of interleukin-1 production"/>
    <property type="evidence" value="ECO:0007669"/>
    <property type="project" value="Ensembl"/>
</dbReference>
<dbReference type="GO" id="GO:0032703">
    <property type="term" value="P:negative regulation of interleukin-2 production"/>
    <property type="evidence" value="ECO:0007669"/>
    <property type="project" value="Ensembl"/>
</dbReference>
<dbReference type="GO" id="GO:0032715">
    <property type="term" value="P:negative regulation of interleukin-6 production"/>
    <property type="evidence" value="ECO:0007669"/>
    <property type="project" value="Ensembl"/>
</dbReference>
<dbReference type="GO" id="GO:0071638">
    <property type="term" value="P:negative regulation of monocyte chemotactic protein-1 production"/>
    <property type="evidence" value="ECO:0007669"/>
    <property type="project" value="Ensembl"/>
</dbReference>
<dbReference type="GO" id="GO:0000122">
    <property type="term" value="P:negative regulation of transcription by RNA polymerase II"/>
    <property type="evidence" value="ECO:0000250"/>
    <property type="project" value="BHF-UCL"/>
</dbReference>
<dbReference type="GO" id="GO:0032720">
    <property type="term" value="P:negative regulation of tumor necrosis factor production"/>
    <property type="evidence" value="ECO:0000314"/>
    <property type="project" value="UniProtKB"/>
</dbReference>
<dbReference type="GO" id="GO:0010804">
    <property type="term" value="P:negative regulation of tumor necrosis factor-mediated signaling pathway"/>
    <property type="evidence" value="ECO:0007669"/>
    <property type="project" value="Ensembl"/>
</dbReference>
<dbReference type="GO" id="GO:0032689">
    <property type="term" value="P:negative regulation of type II interferon production"/>
    <property type="evidence" value="ECO:0000314"/>
    <property type="project" value="UniProtKB"/>
</dbReference>
<dbReference type="GO" id="GO:0010903">
    <property type="term" value="P:negative regulation of very-low-density lipoprotein particle remodeling"/>
    <property type="evidence" value="ECO:0000314"/>
    <property type="project" value="MGI"/>
</dbReference>
<dbReference type="GO" id="GO:0007219">
    <property type="term" value="P:Notch signaling pathway"/>
    <property type="evidence" value="ECO:0007669"/>
    <property type="project" value="Ensembl"/>
</dbReference>
<dbReference type="GO" id="GO:0038185">
    <property type="term" value="P:nuclear receptor-mediated bile acid signaling pathway"/>
    <property type="evidence" value="ECO:0000314"/>
    <property type="project" value="UniProtKB"/>
</dbReference>
<dbReference type="GO" id="GO:1904179">
    <property type="term" value="P:positive regulation of adipose tissue development"/>
    <property type="evidence" value="ECO:0007669"/>
    <property type="project" value="Ensembl"/>
</dbReference>
<dbReference type="GO" id="GO:2001250">
    <property type="term" value="P:positive regulation of ammonia assimilation cycle"/>
    <property type="evidence" value="ECO:0007669"/>
    <property type="project" value="Ensembl"/>
</dbReference>
<dbReference type="GO" id="GO:0045893">
    <property type="term" value="P:positive regulation of DNA-templated transcription"/>
    <property type="evidence" value="ECO:0000314"/>
    <property type="project" value="MGI"/>
</dbReference>
<dbReference type="GO" id="GO:2000213">
    <property type="term" value="P:positive regulation of glutamate metabolic process"/>
    <property type="evidence" value="ECO:0000250"/>
    <property type="project" value="BHF-UCL"/>
</dbReference>
<dbReference type="GO" id="GO:0046628">
    <property type="term" value="P:positive regulation of insulin receptor signaling pathway"/>
    <property type="evidence" value="ECO:0007669"/>
    <property type="project" value="Ensembl"/>
</dbReference>
<dbReference type="GO" id="GO:0035774">
    <property type="term" value="P:positive regulation of insulin secretion involved in cellular response to glucose stimulus"/>
    <property type="evidence" value="ECO:0007669"/>
    <property type="project" value="Ensembl"/>
</dbReference>
<dbReference type="GO" id="GO:0032740">
    <property type="term" value="P:positive regulation of interleukin-17 production"/>
    <property type="evidence" value="ECO:0000314"/>
    <property type="project" value="UniProtKB"/>
</dbReference>
<dbReference type="GO" id="GO:1905695">
    <property type="term" value="P:positive regulation of phosphatidic acid biosynthetic process"/>
    <property type="evidence" value="ECO:0000314"/>
    <property type="project" value="ParkinsonsUK-UCL"/>
</dbReference>
<dbReference type="GO" id="GO:0045944">
    <property type="term" value="P:positive regulation of transcription by RNA polymerase II"/>
    <property type="evidence" value="ECO:0000314"/>
    <property type="project" value="ParkinsonsUK-UCL"/>
</dbReference>
<dbReference type="GO" id="GO:0070857">
    <property type="term" value="P:regulation of bile acid biosynthetic process"/>
    <property type="evidence" value="ECO:0000304"/>
    <property type="project" value="BHF-UCL"/>
</dbReference>
<dbReference type="GO" id="GO:0090181">
    <property type="term" value="P:regulation of cholesterol metabolic process"/>
    <property type="evidence" value="ECO:0000304"/>
    <property type="project" value="BHF-UCL"/>
</dbReference>
<dbReference type="GO" id="GO:0006355">
    <property type="term" value="P:regulation of DNA-templated transcription"/>
    <property type="evidence" value="ECO:0000315"/>
    <property type="project" value="UniProtKB"/>
</dbReference>
<dbReference type="GO" id="GO:0061178">
    <property type="term" value="P:regulation of insulin secretion involved in cellular response to glucose stimulus"/>
    <property type="evidence" value="ECO:0000314"/>
    <property type="project" value="UniProtKB"/>
</dbReference>
<dbReference type="GO" id="GO:0010988">
    <property type="term" value="P:regulation of low-density lipoprotein particle clearance"/>
    <property type="evidence" value="ECO:0000314"/>
    <property type="project" value="UniProtKB"/>
</dbReference>
<dbReference type="GO" id="GO:0006357">
    <property type="term" value="P:regulation of transcription by RNA polymerase II"/>
    <property type="evidence" value="ECO:0000314"/>
    <property type="project" value="UniProtKB"/>
</dbReference>
<dbReference type="GO" id="GO:0034255">
    <property type="term" value="P:regulation of urea metabolic process"/>
    <property type="evidence" value="ECO:0000250"/>
    <property type="project" value="BHF-UCL"/>
</dbReference>
<dbReference type="GO" id="GO:0034162">
    <property type="term" value="P:toll-like receptor 9 signaling pathway"/>
    <property type="evidence" value="ECO:0007669"/>
    <property type="project" value="Ensembl"/>
</dbReference>
<dbReference type="GO" id="GO:0006366">
    <property type="term" value="P:transcription by RNA polymerase II"/>
    <property type="evidence" value="ECO:0007669"/>
    <property type="project" value="Ensembl"/>
</dbReference>
<dbReference type="CDD" id="cd06962">
    <property type="entry name" value="NR_DBD_FXR"/>
    <property type="match status" value="1"/>
</dbReference>
<dbReference type="CDD" id="cd06936">
    <property type="entry name" value="NR_LBD_Fxr"/>
    <property type="match status" value="1"/>
</dbReference>
<dbReference type="DisProt" id="DP01914"/>
<dbReference type="FunFam" id="1.10.565.10:FF:000018">
    <property type="entry name" value="Bile acid receptor isoform 4"/>
    <property type="match status" value="1"/>
</dbReference>
<dbReference type="FunFam" id="3.30.50.10:FF:000021">
    <property type="entry name" value="bile acid receptor isoform X2"/>
    <property type="match status" value="1"/>
</dbReference>
<dbReference type="Gene3D" id="3.30.50.10">
    <property type="entry name" value="Erythroid Transcription Factor GATA-1, subunit A"/>
    <property type="match status" value="1"/>
</dbReference>
<dbReference type="Gene3D" id="1.10.565.10">
    <property type="entry name" value="Retinoid X Receptor"/>
    <property type="match status" value="1"/>
</dbReference>
<dbReference type="IDEAL" id="IID00391"/>
<dbReference type="InterPro" id="IPR035500">
    <property type="entry name" value="NHR-like_dom_sf"/>
</dbReference>
<dbReference type="InterPro" id="IPR044114">
    <property type="entry name" value="NR_LBD_NR1H4"/>
</dbReference>
<dbReference type="InterPro" id="IPR000536">
    <property type="entry name" value="Nucl_hrmn_rcpt_lig-bd"/>
</dbReference>
<dbReference type="InterPro" id="IPR050234">
    <property type="entry name" value="Nuclear_hormone_rcpt_NR1"/>
</dbReference>
<dbReference type="InterPro" id="IPR001723">
    <property type="entry name" value="Nuclear_hrmn_rcpt"/>
</dbReference>
<dbReference type="InterPro" id="IPR001728">
    <property type="entry name" value="ThyrH_rcpt"/>
</dbReference>
<dbReference type="InterPro" id="IPR001628">
    <property type="entry name" value="Znf_hrmn_rcpt"/>
</dbReference>
<dbReference type="InterPro" id="IPR013088">
    <property type="entry name" value="Znf_NHR/GATA"/>
</dbReference>
<dbReference type="PANTHER" id="PTHR24082:SF155">
    <property type="entry name" value="BILE ACID RECEPTOR"/>
    <property type="match status" value="1"/>
</dbReference>
<dbReference type="PANTHER" id="PTHR24082">
    <property type="entry name" value="NUCLEAR HORMONE RECEPTOR"/>
    <property type="match status" value="1"/>
</dbReference>
<dbReference type="Pfam" id="PF00104">
    <property type="entry name" value="Hormone_recep"/>
    <property type="match status" value="1"/>
</dbReference>
<dbReference type="Pfam" id="PF00105">
    <property type="entry name" value="zf-C4"/>
    <property type="match status" value="1"/>
</dbReference>
<dbReference type="PRINTS" id="PR00398">
    <property type="entry name" value="STRDHORMONER"/>
</dbReference>
<dbReference type="PRINTS" id="PR00047">
    <property type="entry name" value="STROIDFINGER"/>
</dbReference>
<dbReference type="PRINTS" id="PR00546">
    <property type="entry name" value="THYROIDHORMR"/>
</dbReference>
<dbReference type="SMART" id="SM00430">
    <property type="entry name" value="HOLI"/>
    <property type="match status" value="1"/>
</dbReference>
<dbReference type="SMART" id="SM00399">
    <property type="entry name" value="ZnF_C4"/>
    <property type="match status" value="1"/>
</dbReference>
<dbReference type="SUPFAM" id="SSF57716">
    <property type="entry name" value="Glucocorticoid receptor-like (DNA-binding domain)"/>
    <property type="match status" value="1"/>
</dbReference>
<dbReference type="SUPFAM" id="SSF48508">
    <property type="entry name" value="Nuclear receptor ligand-binding domain"/>
    <property type="match status" value="1"/>
</dbReference>
<dbReference type="PROSITE" id="PS51843">
    <property type="entry name" value="NR_LBD"/>
    <property type="match status" value="1"/>
</dbReference>
<dbReference type="PROSITE" id="PS00031">
    <property type="entry name" value="NUCLEAR_REC_DBD_1"/>
    <property type="match status" value="1"/>
</dbReference>
<dbReference type="PROSITE" id="PS51030">
    <property type="entry name" value="NUCLEAR_REC_DBD_2"/>
    <property type="match status" value="1"/>
</dbReference>
<protein>
    <recommendedName>
        <fullName>Bile acid receptor</fullName>
    </recommendedName>
    <alternativeName>
        <fullName>Farnesoid X-activated receptor</fullName>
    </alternativeName>
    <alternativeName>
        <fullName>Farnesol receptor HRR-1</fullName>
    </alternativeName>
    <alternativeName>
        <fullName>Nuclear receptor subfamily 1 group H member 4</fullName>
    </alternativeName>
    <alternativeName>
        <fullName>Retinoid X receptor-interacting protein 14</fullName>
        <shortName>RXR-interacting protein 14</shortName>
    </alternativeName>
</protein>